<proteinExistence type="evidence at protein level"/>
<feature type="initiator methionine" description="Removed" evidence="13">
    <location>
        <position position="1"/>
    </location>
</feature>
<feature type="chain" id="PRO_0000130113" description="Small ribosomal subunit protein uS3">
    <location>
        <begin position="2"/>
        <end position="233"/>
    </location>
</feature>
<feature type="domain" description="KH type-2">
    <location>
        <begin position="39"/>
        <end position="107"/>
    </location>
</feature>
<feature type="mutagenesis site" description="Decreases mRNA unwinding ability of the ribosome." evidence="6">
    <original>RRAMK</original>
    <variation>AAAMA</variation>
    <location>
        <begin position="131"/>
        <end position="135"/>
    </location>
</feature>
<feature type="helix" evidence="24">
    <location>
        <begin position="7"/>
        <end position="10"/>
    </location>
</feature>
<feature type="turn" evidence="24">
    <location>
        <begin position="13"/>
        <end position="15"/>
    </location>
</feature>
<feature type="strand" evidence="24">
    <location>
        <begin position="19"/>
        <end position="21"/>
    </location>
</feature>
<feature type="helix" evidence="24">
    <location>
        <begin position="26"/>
        <end position="46"/>
    </location>
</feature>
<feature type="helix" evidence="24">
    <location>
        <begin position="48"/>
        <end position="50"/>
    </location>
</feature>
<feature type="strand" evidence="24">
    <location>
        <begin position="52"/>
        <end position="58"/>
    </location>
</feature>
<feature type="strand" evidence="23">
    <location>
        <begin position="60"/>
        <end position="63"/>
    </location>
</feature>
<feature type="strand" evidence="24">
    <location>
        <begin position="64"/>
        <end position="71"/>
    </location>
</feature>
<feature type="helix" evidence="24">
    <location>
        <begin position="73"/>
        <end position="77"/>
    </location>
</feature>
<feature type="strand" evidence="24">
    <location>
        <begin position="79"/>
        <end position="82"/>
    </location>
</feature>
<feature type="helix" evidence="24">
    <location>
        <begin position="83"/>
        <end position="95"/>
    </location>
</feature>
<feature type="strand" evidence="24">
    <location>
        <begin position="99"/>
        <end position="105"/>
    </location>
</feature>
<feature type="helix" evidence="24">
    <location>
        <begin position="109"/>
        <end position="111"/>
    </location>
</feature>
<feature type="helix" evidence="25">
    <location>
        <begin position="113"/>
        <end position="125"/>
    </location>
</feature>
<feature type="helix" evidence="25">
    <location>
        <begin position="130"/>
        <end position="137"/>
    </location>
</feature>
<feature type="turn" evidence="26">
    <location>
        <begin position="143"/>
        <end position="145"/>
    </location>
</feature>
<feature type="strand" evidence="25">
    <location>
        <begin position="149"/>
        <end position="156"/>
    </location>
</feature>
<feature type="helix" evidence="25">
    <location>
        <begin position="157"/>
        <end position="159"/>
    </location>
</feature>
<feature type="strand" evidence="25">
    <location>
        <begin position="164"/>
        <end position="171"/>
    </location>
</feature>
<feature type="strand" evidence="24">
    <location>
        <begin position="180"/>
        <end position="191"/>
    </location>
</feature>
<feature type="strand" evidence="26">
    <location>
        <begin position="192"/>
        <end position="194"/>
    </location>
</feature>
<feature type="strand" evidence="25">
    <location>
        <begin position="195"/>
        <end position="202"/>
    </location>
</feature>
<keyword id="KW-0002">3D-structure</keyword>
<keyword id="KW-0903">Direct protein sequencing</keyword>
<keyword id="KW-1185">Reference proteome</keyword>
<keyword id="KW-0687">Ribonucleoprotein</keyword>
<keyword id="KW-0689">Ribosomal protein</keyword>
<keyword id="KW-0694">RNA-binding</keyword>
<keyword id="KW-0699">rRNA-binding</keyword>
<dbReference type="EMBL" id="X02613">
    <property type="protein sequence ID" value="CAA26466.1"/>
    <property type="molecule type" value="Genomic_DNA"/>
</dbReference>
<dbReference type="EMBL" id="U18997">
    <property type="protein sequence ID" value="AAA58111.1"/>
    <property type="molecule type" value="Genomic_DNA"/>
</dbReference>
<dbReference type="EMBL" id="U00096">
    <property type="protein sequence ID" value="AAC76339.1"/>
    <property type="molecule type" value="Genomic_DNA"/>
</dbReference>
<dbReference type="EMBL" id="AP009048">
    <property type="protein sequence ID" value="BAE77977.1"/>
    <property type="molecule type" value="Genomic_DNA"/>
</dbReference>
<dbReference type="PIR" id="H23129">
    <property type="entry name" value="R3EC3"/>
</dbReference>
<dbReference type="RefSeq" id="NP_417773.1">
    <property type="nucleotide sequence ID" value="NC_000913.3"/>
</dbReference>
<dbReference type="RefSeq" id="WP_000529945.1">
    <property type="nucleotide sequence ID" value="NZ_STEB01000038.1"/>
</dbReference>
<dbReference type="PDB" id="2YKR">
    <property type="method" value="EM"/>
    <property type="resolution" value="9.80 A"/>
    <property type="chains" value="C=2-207"/>
</dbReference>
<dbReference type="PDB" id="3J9Y">
    <property type="method" value="EM"/>
    <property type="resolution" value="3.90 A"/>
    <property type="chains" value="c=1-233"/>
</dbReference>
<dbReference type="PDB" id="3J9Z">
    <property type="method" value="EM"/>
    <property type="resolution" value="3.60 A"/>
    <property type="chains" value="SC=2-233"/>
</dbReference>
<dbReference type="PDB" id="3JA1">
    <property type="method" value="EM"/>
    <property type="resolution" value="3.60 A"/>
    <property type="chains" value="SC=2-233"/>
</dbReference>
<dbReference type="PDB" id="3JBU">
    <property type="method" value="EM"/>
    <property type="resolution" value="3.64 A"/>
    <property type="chains" value="C=1-233"/>
</dbReference>
<dbReference type="PDB" id="3JBV">
    <property type="method" value="EM"/>
    <property type="resolution" value="3.32 A"/>
    <property type="chains" value="C=1-233"/>
</dbReference>
<dbReference type="PDB" id="3JCD">
    <property type="method" value="EM"/>
    <property type="resolution" value="3.70 A"/>
    <property type="chains" value="c=1-233"/>
</dbReference>
<dbReference type="PDB" id="3JCE">
    <property type="method" value="EM"/>
    <property type="resolution" value="3.20 A"/>
    <property type="chains" value="c=1-233"/>
</dbReference>
<dbReference type="PDB" id="3JCJ">
    <property type="method" value="EM"/>
    <property type="resolution" value="3.70 A"/>
    <property type="chains" value="h=1-233"/>
</dbReference>
<dbReference type="PDB" id="3JCN">
    <property type="method" value="EM"/>
    <property type="resolution" value="4.60 A"/>
    <property type="chains" value="c=1-233"/>
</dbReference>
<dbReference type="PDB" id="4A2I">
    <property type="method" value="EM"/>
    <property type="resolution" value="16.50 A"/>
    <property type="chains" value="C=2-207"/>
</dbReference>
<dbReference type="PDB" id="4ADV">
    <property type="method" value="EM"/>
    <property type="resolution" value="13.50 A"/>
    <property type="chains" value="C=2-233"/>
</dbReference>
<dbReference type="PDB" id="4ODQ">
    <property type="method" value="X-ray"/>
    <property type="resolution" value="2.00 A"/>
    <property type="chains" value="B=11-25"/>
</dbReference>
<dbReference type="PDB" id="4U1U">
    <property type="method" value="X-ray"/>
    <property type="resolution" value="2.95 A"/>
    <property type="chains" value="AC/CC=2-207"/>
</dbReference>
<dbReference type="PDB" id="4U1V">
    <property type="method" value="X-ray"/>
    <property type="resolution" value="3.00 A"/>
    <property type="chains" value="AC/CC=2-207"/>
</dbReference>
<dbReference type="PDB" id="4U20">
    <property type="method" value="X-ray"/>
    <property type="resolution" value="2.90 A"/>
    <property type="chains" value="AC/CC=2-207"/>
</dbReference>
<dbReference type="PDB" id="4U24">
    <property type="method" value="X-ray"/>
    <property type="resolution" value="2.90 A"/>
    <property type="chains" value="AC/CC=2-207"/>
</dbReference>
<dbReference type="PDB" id="4U25">
    <property type="method" value="X-ray"/>
    <property type="resolution" value="2.90 A"/>
    <property type="chains" value="AC/CC=2-207"/>
</dbReference>
<dbReference type="PDB" id="4U26">
    <property type="method" value="X-ray"/>
    <property type="resolution" value="2.80 A"/>
    <property type="chains" value="AC/CC=2-207"/>
</dbReference>
<dbReference type="PDB" id="4U27">
    <property type="method" value="X-ray"/>
    <property type="resolution" value="2.80 A"/>
    <property type="chains" value="AC/CC=2-207"/>
</dbReference>
<dbReference type="PDB" id="4V47">
    <property type="method" value="EM"/>
    <property type="resolution" value="12.30 A"/>
    <property type="chains" value="BC=2-233"/>
</dbReference>
<dbReference type="PDB" id="4V48">
    <property type="method" value="EM"/>
    <property type="resolution" value="11.50 A"/>
    <property type="chains" value="BC=2-233"/>
</dbReference>
<dbReference type="PDB" id="4V4H">
    <property type="method" value="X-ray"/>
    <property type="resolution" value="3.46 A"/>
    <property type="chains" value="AC/CC=1-233"/>
</dbReference>
<dbReference type="PDB" id="4V4Q">
    <property type="method" value="X-ray"/>
    <property type="resolution" value="3.46 A"/>
    <property type="chains" value="AC/CC=2-233"/>
</dbReference>
<dbReference type="PDB" id="4V4V">
    <property type="method" value="EM"/>
    <property type="resolution" value="15.00 A"/>
    <property type="chains" value="AC=2-207"/>
</dbReference>
<dbReference type="PDB" id="4V4W">
    <property type="method" value="EM"/>
    <property type="resolution" value="15.00 A"/>
    <property type="chains" value="AC=2-207"/>
</dbReference>
<dbReference type="PDB" id="4V50">
    <property type="method" value="X-ray"/>
    <property type="resolution" value="3.22 A"/>
    <property type="chains" value="AC/CC=2-233"/>
</dbReference>
<dbReference type="PDB" id="4V52">
    <property type="method" value="X-ray"/>
    <property type="resolution" value="3.21 A"/>
    <property type="chains" value="AC/CC=2-233"/>
</dbReference>
<dbReference type="PDB" id="4V53">
    <property type="method" value="X-ray"/>
    <property type="resolution" value="3.54 A"/>
    <property type="chains" value="AC/CC=2-233"/>
</dbReference>
<dbReference type="PDB" id="4V54">
    <property type="method" value="X-ray"/>
    <property type="resolution" value="3.30 A"/>
    <property type="chains" value="AC/CC=2-233"/>
</dbReference>
<dbReference type="PDB" id="4V55">
    <property type="method" value="X-ray"/>
    <property type="resolution" value="4.00 A"/>
    <property type="chains" value="AC/CC=2-233"/>
</dbReference>
<dbReference type="PDB" id="4V56">
    <property type="method" value="X-ray"/>
    <property type="resolution" value="3.93 A"/>
    <property type="chains" value="AC/CC=2-233"/>
</dbReference>
<dbReference type="PDB" id="4V57">
    <property type="method" value="X-ray"/>
    <property type="resolution" value="3.50 A"/>
    <property type="chains" value="AC/CC=2-233"/>
</dbReference>
<dbReference type="PDB" id="4V5B">
    <property type="method" value="X-ray"/>
    <property type="resolution" value="3.74 A"/>
    <property type="chains" value="BC/DC=2-233"/>
</dbReference>
<dbReference type="PDB" id="4V5H">
    <property type="method" value="EM"/>
    <property type="resolution" value="5.80 A"/>
    <property type="chains" value="AC=2-207"/>
</dbReference>
<dbReference type="PDB" id="4V5Y">
    <property type="method" value="X-ray"/>
    <property type="resolution" value="4.45 A"/>
    <property type="chains" value="AC/CC=2-233"/>
</dbReference>
<dbReference type="PDB" id="4V64">
    <property type="method" value="X-ray"/>
    <property type="resolution" value="3.50 A"/>
    <property type="chains" value="AC/CC=2-233"/>
</dbReference>
<dbReference type="PDB" id="4V65">
    <property type="method" value="EM"/>
    <property type="resolution" value="9.00 A"/>
    <property type="chains" value="AO=1-233"/>
</dbReference>
<dbReference type="PDB" id="4V66">
    <property type="method" value="EM"/>
    <property type="resolution" value="9.00 A"/>
    <property type="chains" value="AO=1-233"/>
</dbReference>
<dbReference type="PDB" id="4V69">
    <property type="method" value="EM"/>
    <property type="resolution" value="6.70 A"/>
    <property type="chains" value="AC=2-207"/>
</dbReference>
<dbReference type="PDB" id="4V6C">
    <property type="method" value="X-ray"/>
    <property type="resolution" value="3.19 A"/>
    <property type="chains" value="AC/CC=1-233"/>
</dbReference>
<dbReference type="PDB" id="4V6D">
    <property type="method" value="X-ray"/>
    <property type="resolution" value="3.81 A"/>
    <property type="chains" value="AC/CC=1-233"/>
</dbReference>
<dbReference type="PDB" id="4V6E">
    <property type="method" value="X-ray"/>
    <property type="resolution" value="3.71 A"/>
    <property type="chains" value="AC/CC=1-233"/>
</dbReference>
<dbReference type="PDB" id="4V6K">
    <property type="method" value="EM"/>
    <property type="resolution" value="8.25 A"/>
    <property type="chains" value="BG=1-233"/>
</dbReference>
<dbReference type="PDB" id="4V6L">
    <property type="method" value="EM"/>
    <property type="resolution" value="13.20 A"/>
    <property type="chains" value="AG=1-233"/>
</dbReference>
<dbReference type="PDB" id="4V6M">
    <property type="method" value="EM"/>
    <property type="resolution" value="7.10 A"/>
    <property type="chains" value="AC=2-233"/>
</dbReference>
<dbReference type="PDB" id="4V6N">
    <property type="method" value="EM"/>
    <property type="resolution" value="12.10 A"/>
    <property type="chains" value="BF=2-233"/>
</dbReference>
<dbReference type="PDB" id="4V6O">
    <property type="method" value="EM"/>
    <property type="resolution" value="14.70 A"/>
    <property type="chains" value="AF=2-233"/>
</dbReference>
<dbReference type="PDB" id="4V6P">
    <property type="method" value="EM"/>
    <property type="resolution" value="13.50 A"/>
    <property type="chains" value="AF=2-233"/>
</dbReference>
<dbReference type="PDB" id="4V6Q">
    <property type="method" value="EM"/>
    <property type="resolution" value="11.50 A"/>
    <property type="chains" value="AF=2-233"/>
</dbReference>
<dbReference type="PDB" id="4V6R">
    <property type="method" value="EM"/>
    <property type="resolution" value="11.50 A"/>
    <property type="chains" value="AF=2-233"/>
</dbReference>
<dbReference type="PDB" id="4V6S">
    <property type="method" value="EM"/>
    <property type="resolution" value="13.10 A"/>
    <property type="chains" value="BE=2-233"/>
</dbReference>
<dbReference type="PDB" id="4V6T">
    <property type="method" value="EM"/>
    <property type="resolution" value="8.30 A"/>
    <property type="chains" value="AC=2-207"/>
</dbReference>
<dbReference type="PDB" id="4V6V">
    <property type="method" value="EM"/>
    <property type="resolution" value="9.80 A"/>
    <property type="chains" value="AC=2-233"/>
</dbReference>
<dbReference type="PDB" id="4V6Y">
    <property type="method" value="EM"/>
    <property type="resolution" value="12.00 A"/>
    <property type="chains" value="AC=1-207"/>
</dbReference>
<dbReference type="PDB" id="4V6Z">
    <property type="method" value="EM"/>
    <property type="resolution" value="12.00 A"/>
    <property type="chains" value="AC=1-207"/>
</dbReference>
<dbReference type="PDB" id="4V70">
    <property type="method" value="EM"/>
    <property type="resolution" value="17.00 A"/>
    <property type="chains" value="AC=1-207"/>
</dbReference>
<dbReference type="PDB" id="4V71">
    <property type="method" value="EM"/>
    <property type="resolution" value="20.00 A"/>
    <property type="chains" value="AC=1-207"/>
</dbReference>
<dbReference type="PDB" id="4V72">
    <property type="method" value="EM"/>
    <property type="resolution" value="13.00 A"/>
    <property type="chains" value="AC=1-207"/>
</dbReference>
<dbReference type="PDB" id="4V73">
    <property type="method" value="EM"/>
    <property type="resolution" value="15.00 A"/>
    <property type="chains" value="AC=1-207"/>
</dbReference>
<dbReference type="PDB" id="4V74">
    <property type="method" value="EM"/>
    <property type="resolution" value="17.00 A"/>
    <property type="chains" value="AC=1-207"/>
</dbReference>
<dbReference type="PDB" id="4V75">
    <property type="method" value="EM"/>
    <property type="resolution" value="12.00 A"/>
    <property type="chains" value="AC=1-207"/>
</dbReference>
<dbReference type="PDB" id="4V76">
    <property type="method" value="EM"/>
    <property type="resolution" value="17.00 A"/>
    <property type="chains" value="AC=1-207"/>
</dbReference>
<dbReference type="PDB" id="4V77">
    <property type="method" value="EM"/>
    <property type="resolution" value="17.00 A"/>
    <property type="chains" value="AC=1-207"/>
</dbReference>
<dbReference type="PDB" id="4V78">
    <property type="method" value="EM"/>
    <property type="resolution" value="20.00 A"/>
    <property type="chains" value="AC=1-207"/>
</dbReference>
<dbReference type="PDB" id="4V79">
    <property type="method" value="EM"/>
    <property type="resolution" value="15.00 A"/>
    <property type="chains" value="AC=1-207"/>
</dbReference>
<dbReference type="PDB" id="4V7A">
    <property type="method" value="EM"/>
    <property type="resolution" value="9.00 A"/>
    <property type="chains" value="AC=1-207"/>
</dbReference>
<dbReference type="PDB" id="4V7B">
    <property type="method" value="EM"/>
    <property type="resolution" value="6.80 A"/>
    <property type="chains" value="AC=1-233"/>
</dbReference>
<dbReference type="PDB" id="4V7C">
    <property type="method" value="EM"/>
    <property type="resolution" value="7.60 A"/>
    <property type="chains" value="AC=2-233"/>
</dbReference>
<dbReference type="PDB" id="4V7D">
    <property type="method" value="EM"/>
    <property type="resolution" value="7.60 A"/>
    <property type="chains" value="BC=2-233"/>
</dbReference>
<dbReference type="PDB" id="4V7I">
    <property type="method" value="EM"/>
    <property type="resolution" value="9.60 A"/>
    <property type="chains" value="BC=1-233"/>
</dbReference>
<dbReference type="PDB" id="4V7S">
    <property type="method" value="X-ray"/>
    <property type="resolution" value="3.25 A"/>
    <property type="chains" value="AC/CC=2-207"/>
</dbReference>
<dbReference type="PDB" id="4V7T">
    <property type="method" value="X-ray"/>
    <property type="resolution" value="3.19 A"/>
    <property type="chains" value="AC/CC=2-207"/>
</dbReference>
<dbReference type="PDB" id="4V7U">
    <property type="method" value="X-ray"/>
    <property type="resolution" value="3.10 A"/>
    <property type="chains" value="AC/CC=2-207"/>
</dbReference>
<dbReference type="PDB" id="4V7V">
    <property type="method" value="X-ray"/>
    <property type="resolution" value="3.29 A"/>
    <property type="chains" value="AC/CC=2-207"/>
</dbReference>
<dbReference type="PDB" id="4V85">
    <property type="method" value="X-ray"/>
    <property type="resolution" value="3.20 A"/>
    <property type="chains" value="AC=1-233"/>
</dbReference>
<dbReference type="PDB" id="4V89">
    <property type="method" value="X-ray"/>
    <property type="resolution" value="3.70 A"/>
    <property type="chains" value="AC=1-233"/>
</dbReference>
<dbReference type="PDB" id="4V9C">
    <property type="method" value="X-ray"/>
    <property type="resolution" value="3.30 A"/>
    <property type="chains" value="AC/CC=1-233"/>
</dbReference>
<dbReference type="PDB" id="4V9D">
    <property type="method" value="X-ray"/>
    <property type="resolution" value="3.00 A"/>
    <property type="chains" value="AC/BC=2-207"/>
</dbReference>
<dbReference type="PDB" id="4V9O">
    <property type="method" value="X-ray"/>
    <property type="resolution" value="2.90 A"/>
    <property type="chains" value="BC/DC/FC/HC=1-233"/>
</dbReference>
<dbReference type="PDB" id="4V9P">
    <property type="method" value="X-ray"/>
    <property type="resolution" value="2.90 A"/>
    <property type="chains" value="BC/DC/FC/HC=1-233"/>
</dbReference>
<dbReference type="PDB" id="4WF1">
    <property type="method" value="X-ray"/>
    <property type="resolution" value="3.09 A"/>
    <property type="chains" value="AC/CC=2-207"/>
</dbReference>
<dbReference type="PDB" id="4WOI">
    <property type="method" value="X-ray"/>
    <property type="resolution" value="3.00 A"/>
    <property type="chains" value="AC/DC=1-233"/>
</dbReference>
<dbReference type="PDB" id="4WWW">
    <property type="method" value="X-ray"/>
    <property type="resolution" value="3.10 A"/>
    <property type="chains" value="QC/XC=2-207"/>
</dbReference>
<dbReference type="PDB" id="4YBB">
    <property type="method" value="X-ray"/>
    <property type="resolution" value="2.10 A"/>
    <property type="chains" value="AC/BC=2-207"/>
</dbReference>
<dbReference type="PDB" id="5AFI">
    <property type="method" value="EM"/>
    <property type="resolution" value="2.90 A"/>
    <property type="chains" value="c=1-233"/>
</dbReference>
<dbReference type="PDB" id="5H5U">
    <property type="method" value="EM"/>
    <property type="resolution" value="3.00 A"/>
    <property type="chains" value="j=2-233"/>
</dbReference>
<dbReference type="PDB" id="5IQR">
    <property type="method" value="EM"/>
    <property type="resolution" value="3.00 A"/>
    <property type="chains" value="h=1-233"/>
</dbReference>
<dbReference type="PDB" id="5IT8">
    <property type="method" value="X-ray"/>
    <property type="resolution" value="3.12 A"/>
    <property type="chains" value="AC/BC=2-207"/>
</dbReference>
<dbReference type="PDB" id="5J5B">
    <property type="method" value="X-ray"/>
    <property type="resolution" value="2.80 A"/>
    <property type="chains" value="AC/BC=2-207"/>
</dbReference>
<dbReference type="PDB" id="5J7L">
    <property type="method" value="X-ray"/>
    <property type="resolution" value="3.00 A"/>
    <property type="chains" value="AC/BC=2-207"/>
</dbReference>
<dbReference type="PDB" id="5J88">
    <property type="method" value="X-ray"/>
    <property type="resolution" value="3.32 A"/>
    <property type="chains" value="AC/BC=2-207"/>
</dbReference>
<dbReference type="PDB" id="5J8A">
    <property type="method" value="X-ray"/>
    <property type="resolution" value="3.10 A"/>
    <property type="chains" value="AC/BC=2-207"/>
</dbReference>
<dbReference type="PDB" id="5J91">
    <property type="method" value="X-ray"/>
    <property type="resolution" value="2.96 A"/>
    <property type="chains" value="AC/BC=2-207"/>
</dbReference>
<dbReference type="PDB" id="5JC9">
    <property type="method" value="X-ray"/>
    <property type="resolution" value="3.03 A"/>
    <property type="chains" value="AC/BC=2-207"/>
</dbReference>
<dbReference type="PDB" id="5JTE">
    <property type="method" value="EM"/>
    <property type="resolution" value="3.60 A"/>
    <property type="chains" value="AC=1-233"/>
</dbReference>
<dbReference type="PDB" id="5JU8">
    <property type="method" value="EM"/>
    <property type="resolution" value="3.60 A"/>
    <property type="chains" value="AC=1-233"/>
</dbReference>
<dbReference type="PDB" id="5KCR">
    <property type="method" value="EM"/>
    <property type="resolution" value="3.60 A"/>
    <property type="chains" value="1c=1-233"/>
</dbReference>
<dbReference type="PDB" id="5KCS">
    <property type="method" value="EM"/>
    <property type="resolution" value="3.90 A"/>
    <property type="chains" value="1c=1-233"/>
</dbReference>
<dbReference type="PDB" id="5KPS">
    <property type="method" value="EM"/>
    <property type="resolution" value="3.90 A"/>
    <property type="chains" value="8=1-233"/>
</dbReference>
<dbReference type="PDB" id="5KPV">
    <property type="method" value="EM"/>
    <property type="resolution" value="4.10 A"/>
    <property type="chains" value="7=1-233"/>
</dbReference>
<dbReference type="PDB" id="5KPW">
    <property type="method" value="EM"/>
    <property type="resolution" value="3.90 A"/>
    <property type="chains" value="7=1-233"/>
</dbReference>
<dbReference type="PDB" id="5KPX">
    <property type="method" value="EM"/>
    <property type="resolution" value="3.90 A"/>
    <property type="chains" value="7=1-233"/>
</dbReference>
<dbReference type="PDB" id="5L3P">
    <property type="method" value="EM"/>
    <property type="resolution" value="3.70 A"/>
    <property type="chains" value="c=1-233"/>
</dbReference>
<dbReference type="PDB" id="5LZA">
    <property type="method" value="EM"/>
    <property type="resolution" value="3.60 A"/>
    <property type="chains" value="c=2-207"/>
</dbReference>
<dbReference type="PDB" id="5LZB">
    <property type="method" value="EM"/>
    <property type="resolution" value="5.30 A"/>
    <property type="chains" value="c=2-207"/>
</dbReference>
<dbReference type="PDB" id="5LZC">
    <property type="method" value="EM"/>
    <property type="resolution" value="4.80 A"/>
    <property type="chains" value="c=2-207"/>
</dbReference>
<dbReference type="PDB" id="5LZD">
    <property type="method" value="EM"/>
    <property type="resolution" value="3.40 A"/>
    <property type="chains" value="c=2-207"/>
</dbReference>
<dbReference type="PDB" id="5LZE">
    <property type="method" value="EM"/>
    <property type="resolution" value="3.50 A"/>
    <property type="chains" value="c=2-207"/>
</dbReference>
<dbReference type="PDB" id="5LZF">
    <property type="method" value="EM"/>
    <property type="resolution" value="4.60 A"/>
    <property type="chains" value="c=2-207"/>
</dbReference>
<dbReference type="PDB" id="5MDV">
    <property type="method" value="EM"/>
    <property type="resolution" value="2.97 A"/>
    <property type="chains" value="h=1-233"/>
</dbReference>
<dbReference type="PDB" id="5MDW">
    <property type="method" value="EM"/>
    <property type="resolution" value="3.06 A"/>
    <property type="chains" value="h=1-233"/>
</dbReference>
<dbReference type="PDB" id="5MDY">
    <property type="method" value="EM"/>
    <property type="resolution" value="3.35 A"/>
    <property type="chains" value="h=1-233"/>
</dbReference>
<dbReference type="PDB" id="5MDZ">
    <property type="method" value="EM"/>
    <property type="resolution" value="3.10 A"/>
    <property type="chains" value="h=1-233"/>
</dbReference>
<dbReference type="PDB" id="5ME0">
    <property type="method" value="EM"/>
    <property type="resolution" value="13.50 A"/>
    <property type="chains" value="C=1-233"/>
</dbReference>
<dbReference type="PDB" id="5ME1">
    <property type="method" value="EM"/>
    <property type="resolution" value="13.50 A"/>
    <property type="chains" value="C=1-233"/>
</dbReference>
<dbReference type="PDB" id="5MGP">
    <property type="method" value="EM"/>
    <property type="resolution" value="3.10 A"/>
    <property type="chains" value="c=2-207"/>
</dbReference>
<dbReference type="PDB" id="5MY1">
    <property type="method" value="EM"/>
    <property type="resolution" value="7.60 A"/>
    <property type="chains" value="C=2-233"/>
</dbReference>
<dbReference type="PDB" id="5NO4">
    <property type="method" value="EM"/>
    <property type="resolution" value="5.16 A"/>
    <property type="chains" value="C=2-207"/>
</dbReference>
<dbReference type="PDB" id="5NP6">
    <property type="method" value="EM"/>
    <property type="resolution" value="3.60 A"/>
    <property type="chains" value="F=2-207"/>
</dbReference>
<dbReference type="PDB" id="5NWY">
    <property type="method" value="EM"/>
    <property type="resolution" value="2.93 A"/>
    <property type="chains" value="2=1-233"/>
</dbReference>
<dbReference type="PDB" id="5O2R">
    <property type="method" value="EM"/>
    <property type="resolution" value="3.40 A"/>
    <property type="chains" value="c=2-207"/>
</dbReference>
<dbReference type="PDB" id="5U4I">
    <property type="method" value="EM"/>
    <property type="resolution" value="3.50 A"/>
    <property type="chains" value="c=1-233"/>
</dbReference>
<dbReference type="PDB" id="5U4J">
    <property type="method" value="EM"/>
    <property type="resolution" value="3.70 A"/>
    <property type="chains" value="c=1-233"/>
</dbReference>
<dbReference type="PDB" id="5U9F">
    <property type="method" value="EM"/>
    <property type="resolution" value="3.20 A"/>
    <property type="chains" value="C=1-233"/>
</dbReference>
<dbReference type="PDB" id="5U9G">
    <property type="method" value="EM"/>
    <property type="resolution" value="3.20 A"/>
    <property type="chains" value="C=1-233"/>
</dbReference>
<dbReference type="PDB" id="5UYK">
    <property type="method" value="EM"/>
    <property type="resolution" value="3.90 A"/>
    <property type="chains" value="C=2-207"/>
</dbReference>
<dbReference type="PDB" id="5UYL">
    <property type="method" value="EM"/>
    <property type="resolution" value="3.60 A"/>
    <property type="chains" value="C=2-207"/>
</dbReference>
<dbReference type="PDB" id="5UYM">
    <property type="method" value="EM"/>
    <property type="resolution" value="3.20 A"/>
    <property type="chains" value="C=2-207"/>
</dbReference>
<dbReference type="PDB" id="5UYN">
    <property type="method" value="EM"/>
    <property type="resolution" value="4.00 A"/>
    <property type="chains" value="C=2-207"/>
</dbReference>
<dbReference type="PDB" id="5UYP">
    <property type="method" value="EM"/>
    <property type="resolution" value="3.90 A"/>
    <property type="chains" value="C=2-207"/>
</dbReference>
<dbReference type="PDB" id="5UYQ">
    <property type="method" value="EM"/>
    <property type="resolution" value="3.80 A"/>
    <property type="chains" value="C=2-207"/>
</dbReference>
<dbReference type="PDB" id="5UZ4">
    <property type="method" value="EM"/>
    <property type="resolution" value="5.80 A"/>
    <property type="chains" value="C=1-233"/>
</dbReference>
<dbReference type="PDB" id="5WDT">
    <property type="method" value="EM"/>
    <property type="resolution" value="3.00 A"/>
    <property type="chains" value="c=2-207"/>
</dbReference>
<dbReference type="PDB" id="5WE4">
    <property type="method" value="EM"/>
    <property type="resolution" value="3.10 A"/>
    <property type="chains" value="c=2-207"/>
</dbReference>
<dbReference type="PDB" id="5WE6">
    <property type="method" value="EM"/>
    <property type="resolution" value="3.40 A"/>
    <property type="chains" value="c=2-207"/>
</dbReference>
<dbReference type="PDB" id="5WF0">
    <property type="method" value="EM"/>
    <property type="resolution" value="3.60 A"/>
    <property type="chains" value="c=2-207"/>
</dbReference>
<dbReference type="PDB" id="5WFK">
    <property type="method" value="EM"/>
    <property type="resolution" value="3.40 A"/>
    <property type="chains" value="c=2-207"/>
</dbReference>
<dbReference type="PDB" id="5WFS">
    <property type="method" value="EM"/>
    <property type="resolution" value="3.00 A"/>
    <property type="chains" value="c=2-207"/>
</dbReference>
<dbReference type="PDB" id="6AWB">
    <property type="method" value="EM"/>
    <property type="resolution" value="6.70 A"/>
    <property type="chains" value="F=2-207"/>
</dbReference>
<dbReference type="PDB" id="6AWC">
    <property type="method" value="EM"/>
    <property type="resolution" value="7.90 A"/>
    <property type="chains" value="F=2-207"/>
</dbReference>
<dbReference type="PDB" id="6AWD">
    <property type="method" value="EM"/>
    <property type="resolution" value="8.10 A"/>
    <property type="chains" value="F=2-207"/>
</dbReference>
<dbReference type="PDB" id="6BU8">
    <property type="method" value="EM"/>
    <property type="resolution" value="3.50 A"/>
    <property type="chains" value="C=2-207"/>
</dbReference>
<dbReference type="PDB" id="6BY1">
    <property type="method" value="X-ray"/>
    <property type="resolution" value="3.94 A"/>
    <property type="chains" value="AC/BC=2-207"/>
</dbReference>
<dbReference type="PDB" id="6C4I">
    <property type="method" value="EM"/>
    <property type="resolution" value="3.24 A"/>
    <property type="chains" value="c=1-233"/>
</dbReference>
<dbReference type="PDB" id="6DNC">
    <property type="method" value="EM"/>
    <property type="resolution" value="3.70 A"/>
    <property type="chains" value="PA=1-233"/>
</dbReference>
<dbReference type="PDB" id="6ENF">
    <property type="method" value="EM"/>
    <property type="resolution" value="3.20 A"/>
    <property type="chains" value="c=2-207"/>
</dbReference>
<dbReference type="PDB" id="6ENJ">
    <property type="method" value="EM"/>
    <property type="resolution" value="3.70 A"/>
    <property type="chains" value="c=2-207"/>
</dbReference>
<dbReference type="PDB" id="6ENU">
    <property type="method" value="EM"/>
    <property type="resolution" value="3.10 A"/>
    <property type="chains" value="c=2-207"/>
</dbReference>
<dbReference type="PDB" id="6GWT">
    <property type="method" value="EM"/>
    <property type="resolution" value="3.80 A"/>
    <property type="chains" value="c=2-207"/>
</dbReference>
<dbReference type="PDB" id="6GXM">
    <property type="method" value="EM"/>
    <property type="resolution" value="3.80 A"/>
    <property type="chains" value="c=2-207"/>
</dbReference>
<dbReference type="PDB" id="6GXN">
    <property type="method" value="EM"/>
    <property type="resolution" value="3.90 A"/>
    <property type="chains" value="c=2-207"/>
</dbReference>
<dbReference type="PDB" id="6GXO">
    <property type="method" value="EM"/>
    <property type="resolution" value="3.90 A"/>
    <property type="chains" value="c=2-207"/>
</dbReference>
<dbReference type="PDB" id="6GXP">
    <property type="method" value="EM"/>
    <property type="resolution" value="4.40 A"/>
    <property type="chains" value="c=2-207"/>
</dbReference>
<dbReference type="PDB" id="6H4N">
    <property type="method" value="EM"/>
    <property type="resolution" value="3.00 A"/>
    <property type="chains" value="c=2-207"/>
</dbReference>
<dbReference type="PDB" id="6H58">
    <property type="method" value="EM"/>
    <property type="resolution" value="7.90 A"/>
    <property type="chains" value="c/cc=2-207"/>
</dbReference>
<dbReference type="PDB" id="6HRM">
    <property type="method" value="EM"/>
    <property type="resolution" value="2.96 A"/>
    <property type="chains" value="h=2-209"/>
</dbReference>
<dbReference type="PDB" id="6I7V">
    <property type="method" value="X-ray"/>
    <property type="resolution" value="2.90 A"/>
    <property type="chains" value="AC/BC=2-207"/>
</dbReference>
<dbReference type="PDB" id="6NQB">
    <property type="method" value="EM"/>
    <property type="resolution" value="3.80 A"/>
    <property type="chains" value="C=2-207"/>
</dbReference>
<dbReference type="PDB" id="6O7K">
    <property type="method" value="EM"/>
    <property type="resolution" value="4.20 A"/>
    <property type="chains" value="h=2-207"/>
</dbReference>
<dbReference type="PDB" id="6O9J">
    <property type="method" value="EM"/>
    <property type="resolution" value="3.90 A"/>
    <property type="chains" value="c=2-207"/>
</dbReference>
<dbReference type="PDB" id="6O9K">
    <property type="method" value="EM"/>
    <property type="resolution" value="4.00 A"/>
    <property type="chains" value="c=2-207"/>
</dbReference>
<dbReference type="PDB" id="6OFX">
    <property type="method" value="EM"/>
    <property type="resolution" value="3.30 A"/>
    <property type="chains" value="H=2-207"/>
</dbReference>
<dbReference type="PDB" id="6OG7">
    <property type="method" value="EM"/>
    <property type="resolution" value="3.30 A"/>
    <property type="chains" value="H=2-207"/>
</dbReference>
<dbReference type="PDB" id="6OGF">
    <property type="method" value="EM"/>
    <property type="resolution" value="3.90 A"/>
    <property type="chains" value="H=1-233"/>
</dbReference>
<dbReference type="PDB" id="6OGG">
    <property type="method" value="EM"/>
    <property type="resolution" value="4.20 A"/>
    <property type="chains" value="H=1-233"/>
</dbReference>
<dbReference type="PDB" id="6OGI">
    <property type="method" value="EM"/>
    <property type="resolution" value="3.40 A"/>
    <property type="chains" value="H=1-233"/>
</dbReference>
<dbReference type="PDB" id="6OM6">
    <property type="method" value="EM"/>
    <property type="resolution" value="3.10 A"/>
    <property type="chains" value="h=1-233"/>
</dbReference>
<dbReference type="PDB" id="6ORE">
    <property type="method" value="EM"/>
    <property type="resolution" value="2.90 A"/>
    <property type="chains" value="h=2-209"/>
</dbReference>
<dbReference type="PDB" id="6ORL">
    <property type="method" value="EM"/>
    <property type="resolution" value="3.50 A"/>
    <property type="chains" value="h=2-209"/>
</dbReference>
<dbReference type="PDB" id="6OSK">
    <property type="method" value="EM"/>
    <property type="resolution" value="3.60 A"/>
    <property type="chains" value="h=2-209"/>
</dbReference>
<dbReference type="PDB" id="6OSQ">
    <property type="method" value="EM"/>
    <property type="resolution" value="3.50 A"/>
    <property type="chains" value="h=2-209"/>
</dbReference>
<dbReference type="PDB" id="6OST">
    <property type="method" value="EM"/>
    <property type="resolution" value="4.20 A"/>
    <property type="chains" value="h=2-209"/>
</dbReference>
<dbReference type="PDB" id="6OT3">
    <property type="method" value="EM"/>
    <property type="resolution" value="3.90 A"/>
    <property type="chains" value="h=2-209"/>
</dbReference>
<dbReference type="PDB" id="6OUO">
    <property type="method" value="EM"/>
    <property type="resolution" value="3.70 A"/>
    <property type="chains" value="h=2-209"/>
</dbReference>
<dbReference type="PDB" id="6Q97">
    <property type="method" value="EM"/>
    <property type="resolution" value="3.90 A"/>
    <property type="chains" value="h=2-209"/>
</dbReference>
<dbReference type="PDB" id="6Q98">
    <property type="method" value="EM"/>
    <property type="resolution" value="4.30 A"/>
    <property type="chains" value="h=1-233"/>
</dbReference>
<dbReference type="PDB" id="6Q9A">
    <property type="method" value="EM"/>
    <property type="resolution" value="3.70 A"/>
    <property type="chains" value="h=2-209"/>
</dbReference>
<dbReference type="PDB" id="6SZS">
    <property type="method" value="EM"/>
    <property type="resolution" value="3.06 A"/>
    <property type="chains" value="c=1-233"/>
</dbReference>
<dbReference type="PDB" id="6TBV">
    <property type="method" value="EM"/>
    <property type="resolution" value="2.70 A"/>
    <property type="chains" value="S031=1-233"/>
</dbReference>
<dbReference type="PDB" id="6TC3">
    <property type="method" value="EM"/>
    <property type="resolution" value="2.70 A"/>
    <property type="chains" value="S031=1-233"/>
</dbReference>
<dbReference type="PDB" id="6VU3">
    <property type="method" value="EM"/>
    <property type="resolution" value="3.70 A"/>
    <property type="chains" value="I=2-209"/>
</dbReference>
<dbReference type="PDB" id="6VWL">
    <property type="method" value="EM"/>
    <property type="resolution" value="3.10 A"/>
    <property type="chains" value="b=1-233"/>
</dbReference>
<dbReference type="PDB" id="6VWM">
    <property type="method" value="EM"/>
    <property type="resolution" value="3.40 A"/>
    <property type="chains" value="b=1-233"/>
</dbReference>
<dbReference type="PDB" id="6VWN">
    <property type="method" value="EM"/>
    <property type="resolution" value="3.40 A"/>
    <property type="chains" value="b=1-233"/>
</dbReference>
<dbReference type="PDB" id="6VYQ">
    <property type="method" value="EM"/>
    <property type="resolution" value="3.70 A"/>
    <property type="chains" value="I=1-233"/>
</dbReference>
<dbReference type="PDB" id="6VYR">
    <property type="method" value="EM"/>
    <property type="resolution" value="3.80 A"/>
    <property type="chains" value="I=1-233"/>
</dbReference>
<dbReference type="PDB" id="6VYS">
    <property type="method" value="EM"/>
    <property type="resolution" value="3.70 A"/>
    <property type="chains" value="I=1-233"/>
</dbReference>
<dbReference type="PDB" id="6VYT">
    <property type="method" value="EM"/>
    <property type="resolution" value="14.00 A"/>
    <property type="chains" value="I=1-233"/>
</dbReference>
<dbReference type="PDB" id="6VYU">
    <property type="method" value="EM"/>
    <property type="resolution" value="7.00 A"/>
    <property type="chains" value="I=1-233"/>
</dbReference>
<dbReference type="PDB" id="6VYW">
    <property type="method" value="EM"/>
    <property type="resolution" value="7.00 A"/>
    <property type="chains" value="I=1-233"/>
</dbReference>
<dbReference type="PDB" id="6VYX">
    <property type="method" value="EM"/>
    <property type="resolution" value="9.90 A"/>
    <property type="chains" value="I=1-233"/>
</dbReference>
<dbReference type="PDB" id="6VYY">
    <property type="method" value="EM"/>
    <property type="resolution" value="9.90 A"/>
    <property type="chains" value="I=1-233"/>
</dbReference>
<dbReference type="PDB" id="6VYZ">
    <property type="method" value="EM"/>
    <property type="resolution" value="9.90 A"/>
    <property type="chains" value="I=2-209"/>
</dbReference>
<dbReference type="PDB" id="6VZ2">
    <property type="method" value="EM"/>
    <property type="resolution" value="10.00 A"/>
    <property type="chains" value="I=1-233"/>
</dbReference>
<dbReference type="PDB" id="6VZ3">
    <property type="method" value="EM"/>
    <property type="resolution" value="8.90 A"/>
    <property type="chains" value="I=2-209"/>
</dbReference>
<dbReference type="PDB" id="6VZ5">
    <property type="method" value="EM"/>
    <property type="resolution" value="8.90 A"/>
    <property type="chains" value="I=1-233"/>
</dbReference>
<dbReference type="PDB" id="6VZ7">
    <property type="method" value="EM"/>
    <property type="resolution" value="7.00 A"/>
    <property type="chains" value="I=2-209"/>
</dbReference>
<dbReference type="PDB" id="6VZJ">
    <property type="method" value="EM"/>
    <property type="resolution" value="4.10 A"/>
    <property type="chains" value="I=1-233"/>
</dbReference>
<dbReference type="PDB" id="6W6K">
    <property type="method" value="EM"/>
    <property type="resolution" value="3.60 A"/>
    <property type="chains" value="C=1-233"/>
</dbReference>
<dbReference type="PDB" id="6W77">
    <property type="method" value="EM"/>
    <property type="resolution" value="3.60 A"/>
    <property type="chains" value="C=1-233"/>
</dbReference>
<dbReference type="PDB" id="6W7M">
    <property type="method" value="EM"/>
    <property type="resolution" value="3.80 A"/>
    <property type="chains" value="C=1-233"/>
</dbReference>
<dbReference type="PDB" id="6W7N">
    <property type="method" value="EM"/>
    <property type="resolution" value="3.40 A"/>
    <property type="chains" value="C=1-233"/>
</dbReference>
<dbReference type="PDB" id="6WD0">
    <property type="method" value="EM"/>
    <property type="resolution" value="3.00 A"/>
    <property type="chains" value="H=2-207"/>
</dbReference>
<dbReference type="PDB" id="6WD1">
    <property type="method" value="EM"/>
    <property type="resolution" value="3.30 A"/>
    <property type="chains" value="H=2-207"/>
</dbReference>
<dbReference type="PDB" id="6WD2">
    <property type="method" value="EM"/>
    <property type="resolution" value="3.60 A"/>
    <property type="chains" value="H=2-207"/>
</dbReference>
<dbReference type="PDB" id="6WD3">
    <property type="method" value="EM"/>
    <property type="resolution" value="3.60 A"/>
    <property type="chains" value="H=2-207"/>
</dbReference>
<dbReference type="PDB" id="6WD4">
    <property type="method" value="EM"/>
    <property type="resolution" value="3.70 A"/>
    <property type="chains" value="H=2-207"/>
</dbReference>
<dbReference type="PDB" id="6WD5">
    <property type="method" value="EM"/>
    <property type="resolution" value="3.60 A"/>
    <property type="chains" value="H=2-207"/>
</dbReference>
<dbReference type="PDB" id="6WD6">
    <property type="method" value="EM"/>
    <property type="resolution" value="3.70 A"/>
    <property type="chains" value="H=2-207"/>
</dbReference>
<dbReference type="PDB" id="6WD7">
    <property type="method" value="EM"/>
    <property type="resolution" value="3.90 A"/>
    <property type="chains" value="H=2-207"/>
</dbReference>
<dbReference type="PDB" id="6WD8">
    <property type="method" value="EM"/>
    <property type="resolution" value="3.70 A"/>
    <property type="chains" value="H=2-207"/>
</dbReference>
<dbReference type="PDB" id="6WD9">
    <property type="method" value="EM"/>
    <property type="resolution" value="3.70 A"/>
    <property type="chains" value="H=2-207"/>
</dbReference>
<dbReference type="PDB" id="6WDA">
    <property type="method" value="EM"/>
    <property type="resolution" value="3.80 A"/>
    <property type="chains" value="H=2-207"/>
</dbReference>
<dbReference type="PDB" id="6WDB">
    <property type="method" value="EM"/>
    <property type="resolution" value="4.00 A"/>
    <property type="chains" value="H=2-207"/>
</dbReference>
<dbReference type="PDB" id="6WDC">
    <property type="method" value="EM"/>
    <property type="resolution" value="4.20 A"/>
    <property type="chains" value="H=2-207"/>
</dbReference>
<dbReference type="PDB" id="6WDD">
    <property type="method" value="EM"/>
    <property type="resolution" value="3.20 A"/>
    <property type="chains" value="H=2-207"/>
</dbReference>
<dbReference type="PDB" id="6WDE">
    <property type="method" value="EM"/>
    <property type="resolution" value="3.00 A"/>
    <property type="chains" value="H=2-207"/>
</dbReference>
<dbReference type="PDB" id="6WDF">
    <property type="method" value="EM"/>
    <property type="resolution" value="3.30 A"/>
    <property type="chains" value="H=2-207"/>
</dbReference>
<dbReference type="PDB" id="6WDG">
    <property type="method" value="EM"/>
    <property type="resolution" value="3.30 A"/>
    <property type="chains" value="H=2-207"/>
</dbReference>
<dbReference type="PDB" id="6WDH">
    <property type="method" value="EM"/>
    <property type="resolution" value="4.30 A"/>
    <property type="chains" value="H=2-207"/>
</dbReference>
<dbReference type="PDB" id="6WDI">
    <property type="method" value="EM"/>
    <property type="resolution" value="4.00 A"/>
    <property type="chains" value="H=2-207"/>
</dbReference>
<dbReference type="PDB" id="6WDJ">
    <property type="method" value="EM"/>
    <property type="resolution" value="3.70 A"/>
    <property type="chains" value="H=2-207"/>
</dbReference>
<dbReference type="PDB" id="6WDK">
    <property type="method" value="EM"/>
    <property type="resolution" value="3.60 A"/>
    <property type="chains" value="H=2-207"/>
</dbReference>
<dbReference type="PDB" id="6WDL">
    <property type="method" value="EM"/>
    <property type="resolution" value="3.70 A"/>
    <property type="chains" value="H=2-207"/>
</dbReference>
<dbReference type="PDB" id="6WDM">
    <property type="method" value="EM"/>
    <property type="resolution" value="3.60 A"/>
    <property type="chains" value="H=2-207"/>
</dbReference>
<dbReference type="PDB" id="6WNV">
    <property type="method" value="EM"/>
    <property type="resolution" value="3.50 A"/>
    <property type="chains" value="H=2-207"/>
</dbReference>
<dbReference type="PDB" id="6WNW">
    <property type="method" value="EM"/>
    <property type="resolution" value="3.20 A"/>
    <property type="chains" value="H=2-207"/>
</dbReference>
<dbReference type="PDB" id="6X6T">
    <property type="method" value="EM"/>
    <property type="resolution" value="3.20 A"/>
    <property type="chains" value="I=1-233"/>
</dbReference>
<dbReference type="PDB" id="6X7F">
    <property type="method" value="EM"/>
    <property type="resolution" value="3.50 A"/>
    <property type="chains" value="I=1-233"/>
</dbReference>
<dbReference type="PDB" id="6X7K">
    <property type="method" value="EM"/>
    <property type="resolution" value="3.10 A"/>
    <property type="chains" value="I=1-233"/>
</dbReference>
<dbReference type="PDB" id="6X9Q">
    <property type="method" value="EM"/>
    <property type="resolution" value="4.80 A"/>
    <property type="chains" value="I=1-233"/>
</dbReference>
<dbReference type="PDB" id="6XDQ">
    <property type="method" value="EM"/>
    <property type="resolution" value="3.70 A"/>
    <property type="chains" value="I=1-233"/>
</dbReference>
<dbReference type="PDB" id="6XDR">
    <property type="method" value="EM"/>
    <property type="resolution" value="4.70 A"/>
    <property type="chains" value="I=1-233"/>
</dbReference>
<dbReference type="PDB" id="6XE0">
    <property type="method" value="EM"/>
    <property type="resolution" value="6.80 A"/>
    <property type="chains" value="B=2-207"/>
</dbReference>
<dbReference type="PDB" id="6XGF">
    <property type="method" value="EM"/>
    <property type="resolution" value="5.00 A"/>
    <property type="chains" value="I=1-233"/>
</dbReference>
<dbReference type="PDB" id="6XII">
    <property type="method" value="EM"/>
    <property type="resolution" value="7.00 A"/>
    <property type="chains" value="I=1-233"/>
</dbReference>
<dbReference type="PDB" id="6XIJ">
    <property type="method" value="EM"/>
    <property type="resolution" value="8.00 A"/>
    <property type="chains" value="I=1-233"/>
</dbReference>
<dbReference type="PDB" id="6XZA">
    <property type="method" value="EM"/>
    <property type="resolution" value="2.66 A"/>
    <property type="chains" value="C1=2-207"/>
</dbReference>
<dbReference type="PDB" id="6XZB">
    <property type="method" value="EM"/>
    <property type="resolution" value="2.54 A"/>
    <property type="chains" value="C1=2-207"/>
</dbReference>
<dbReference type="PDB" id="6Y69">
    <property type="method" value="EM"/>
    <property type="resolution" value="2.86 A"/>
    <property type="chains" value="c=2-207"/>
</dbReference>
<dbReference type="PDB" id="6ZTJ">
    <property type="method" value="EM"/>
    <property type="resolution" value="3.40 A"/>
    <property type="chains" value="AC=1-233"/>
</dbReference>
<dbReference type="PDB" id="6ZTL">
    <property type="method" value="EM"/>
    <property type="resolution" value="3.50 A"/>
    <property type="chains" value="AC=1-233"/>
</dbReference>
<dbReference type="PDB" id="6ZTM">
    <property type="method" value="EM"/>
    <property type="resolution" value="3.30 A"/>
    <property type="chains" value="AC=1-233"/>
</dbReference>
<dbReference type="PDB" id="6ZTN">
    <property type="method" value="EM"/>
    <property type="resolution" value="3.90 A"/>
    <property type="chains" value="AC=1-233"/>
</dbReference>
<dbReference type="PDB" id="6ZTO">
    <property type="method" value="EM"/>
    <property type="resolution" value="3.00 A"/>
    <property type="chains" value="AC=1-233"/>
</dbReference>
<dbReference type="PDB" id="6ZTP">
    <property type="method" value="EM"/>
    <property type="resolution" value="3.00 A"/>
    <property type="chains" value="AC=1-233"/>
</dbReference>
<dbReference type="PDB" id="6ZU1">
    <property type="method" value="EM"/>
    <property type="resolution" value="3.00 A"/>
    <property type="chains" value="AC=1-233"/>
</dbReference>
<dbReference type="PDB" id="7ABZ">
    <property type="method" value="EM"/>
    <property type="resolution" value="3.21 A"/>
    <property type="chains" value="h=2-207"/>
</dbReference>
<dbReference type="PDB" id="7AC7">
    <property type="method" value="EM"/>
    <property type="resolution" value="3.08 A"/>
    <property type="chains" value="h=2-209"/>
</dbReference>
<dbReference type="PDB" id="7ACJ">
    <property type="method" value="EM"/>
    <property type="resolution" value="3.20 A"/>
    <property type="chains" value="h=2-213"/>
</dbReference>
<dbReference type="PDB" id="7ACR">
    <property type="method" value="EM"/>
    <property type="resolution" value="3.44 A"/>
    <property type="chains" value="h=2-213"/>
</dbReference>
<dbReference type="PDB" id="7AF3">
    <property type="method" value="EM"/>
    <property type="resolution" value="2.82 A"/>
    <property type="chains" value="C=1-233"/>
</dbReference>
<dbReference type="PDB" id="7AF5">
    <property type="method" value="EM"/>
    <property type="resolution" value="2.96 A"/>
    <property type="chains" value="C=1-233"/>
</dbReference>
<dbReference type="PDB" id="7AF8">
    <property type="method" value="EM"/>
    <property type="resolution" value="2.75 A"/>
    <property type="chains" value="C=1-233"/>
</dbReference>
<dbReference type="PDB" id="7AFA">
    <property type="method" value="EM"/>
    <property type="resolution" value="2.95 A"/>
    <property type="chains" value="C=1-233"/>
</dbReference>
<dbReference type="PDB" id="7AFD">
    <property type="method" value="EM"/>
    <property type="resolution" value="3.44 A"/>
    <property type="chains" value="C=1-233"/>
</dbReference>
<dbReference type="PDB" id="7AFH">
    <property type="method" value="EM"/>
    <property type="resolution" value="3.59 A"/>
    <property type="chains" value="C=1-233"/>
</dbReference>
<dbReference type="PDB" id="7AFK">
    <property type="method" value="EM"/>
    <property type="resolution" value="4.90 A"/>
    <property type="chains" value="C=1-233"/>
</dbReference>
<dbReference type="PDB" id="7AFN">
    <property type="method" value="EM"/>
    <property type="resolution" value="3.86 A"/>
    <property type="chains" value="C=1-233"/>
</dbReference>
<dbReference type="PDB" id="7B5K">
    <property type="method" value="EM"/>
    <property type="resolution" value="2.90 A"/>
    <property type="chains" value="c=2-207"/>
</dbReference>
<dbReference type="PDB" id="7BOE">
    <property type="method" value="EM"/>
    <property type="resolution" value="2.90 A"/>
    <property type="chains" value="C=1-233"/>
</dbReference>
<dbReference type="PDB" id="7BOH">
    <property type="method" value="EM"/>
    <property type="resolution" value="2.82 A"/>
    <property type="chains" value="C=1-233"/>
</dbReference>
<dbReference type="PDB" id="7D6Z">
    <property type="method" value="EM"/>
    <property type="resolution" value="3.40 A"/>
    <property type="chains" value="j=1-233"/>
</dbReference>
<dbReference type="PDB" id="7D80">
    <property type="method" value="EM"/>
    <property type="resolution" value="4.10 A"/>
    <property type="chains" value="D=1-233"/>
</dbReference>
<dbReference type="PDB" id="7JSS">
    <property type="method" value="EM"/>
    <property type="resolution" value="3.70 A"/>
    <property type="chains" value="H=2-207"/>
</dbReference>
<dbReference type="PDB" id="7JSW">
    <property type="method" value="EM"/>
    <property type="resolution" value="3.80 A"/>
    <property type="chains" value="H=2-207"/>
</dbReference>
<dbReference type="PDB" id="7JSZ">
    <property type="method" value="EM"/>
    <property type="resolution" value="3.70 A"/>
    <property type="chains" value="H=2-207"/>
</dbReference>
<dbReference type="PDB" id="7JT1">
    <property type="method" value="EM"/>
    <property type="resolution" value="3.30 A"/>
    <property type="chains" value="H=2-207"/>
</dbReference>
<dbReference type="PDB" id="7JT2">
    <property type="method" value="EM"/>
    <property type="resolution" value="3.50 A"/>
    <property type="chains" value="H=2-207"/>
</dbReference>
<dbReference type="PDB" id="7JT3">
    <property type="method" value="EM"/>
    <property type="resolution" value="3.70 A"/>
    <property type="chains" value="H=2-207"/>
</dbReference>
<dbReference type="PDB" id="7K00">
    <property type="method" value="EM"/>
    <property type="resolution" value="1.98 A"/>
    <property type="chains" value="C=1-233"/>
</dbReference>
<dbReference type="PDB" id="7K50">
    <property type="method" value="EM"/>
    <property type="resolution" value="3.40 A"/>
    <property type="chains" value="H=2-207"/>
</dbReference>
<dbReference type="PDB" id="7K51">
    <property type="method" value="EM"/>
    <property type="resolution" value="3.50 A"/>
    <property type="chains" value="H=2-207"/>
</dbReference>
<dbReference type="PDB" id="7K52">
    <property type="method" value="EM"/>
    <property type="resolution" value="3.40 A"/>
    <property type="chains" value="H=2-207"/>
</dbReference>
<dbReference type="PDB" id="7K53">
    <property type="method" value="EM"/>
    <property type="resolution" value="3.20 A"/>
    <property type="chains" value="H=2-207"/>
</dbReference>
<dbReference type="PDB" id="7K54">
    <property type="method" value="EM"/>
    <property type="resolution" value="3.20 A"/>
    <property type="chains" value="H=2-207"/>
</dbReference>
<dbReference type="PDB" id="7K55">
    <property type="method" value="EM"/>
    <property type="resolution" value="3.30 A"/>
    <property type="chains" value="H=2-207"/>
</dbReference>
<dbReference type="PDB" id="7LV0">
    <property type="method" value="EM"/>
    <property type="resolution" value="3.20 A"/>
    <property type="chains" value="H=2-207"/>
</dbReference>
<dbReference type="PDB" id="7M5D">
    <property type="method" value="EM"/>
    <property type="resolution" value="2.80 A"/>
    <property type="chains" value="h=2-209"/>
</dbReference>
<dbReference type="PDB" id="7N1P">
    <property type="method" value="EM"/>
    <property type="resolution" value="2.33 A"/>
    <property type="chains" value="SC=1-233"/>
</dbReference>
<dbReference type="PDB" id="7N2C">
    <property type="method" value="EM"/>
    <property type="resolution" value="2.72 A"/>
    <property type="chains" value="SC=1-233"/>
</dbReference>
<dbReference type="PDB" id="7N2U">
    <property type="method" value="EM"/>
    <property type="resolution" value="2.53 A"/>
    <property type="chains" value="SC=1-233"/>
</dbReference>
<dbReference type="PDB" id="7N2V">
    <property type="method" value="EM"/>
    <property type="resolution" value="2.54 A"/>
    <property type="chains" value="SC=1-233"/>
</dbReference>
<dbReference type="PDB" id="7N30">
    <property type="method" value="EM"/>
    <property type="resolution" value="2.66 A"/>
    <property type="chains" value="SC=1-233"/>
</dbReference>
<dbReference type="PDB" id="7N31">
    <property type="method" value="EM"/>
    <property type="resolution" value="2.69 A"/>
    <property type="chains" value="SC=1-233"/>
</dbReference>
<dbReference type="PDB" id="7NAR">
    <property type="method" value="EM"/>
    <property type="resolution" value="3.00 A"/>
    <property type="chains" value="C=1-233"/>
</dbReference>
<dbReference type="PDB" id="7NAT">
    <property type="method" value="EM"/>
    <property type="resolution" value="3.59 A"/>
    <property type="chains" value="C=1-233"/>
</dbReference>
<dbReference type="PDB" id="7NAU">
    <property type="method" value="EM"/>
    <property type="resolution" value="3.78 A"/>
    <property type="chains" value="C=1-233"/>
</dbReference>
<dbReference type="PDB" id="7NAV">
    <property type="method" value="EM"/>
    <property type="resolution" value="4.80 A"/>
    <property type="chains" value="C=1-233"/>
</dbReference>
<dbReference type="PDB" id="7NAX">
    <property type="method" value="EM"/>
    <property type="resolution" value="2.96 A"/>
    <property type="chains" value="C=1-233"/>
</dbReference>
<dbReference type="PDB" id="7NBU">
    <property type="method" value="EM"/>
    <property type="resolution" value="3.11 A"/>
    <property type="chains" value="C=2-207"/>
</dbReference>
<dbReference type="PDB" id="7O19">
    <property type="method" value="EM"/>
    <property type="resolution" value="2.90 A"/>
    <property type="chains" value="AC=1-233"/>
</dbReference>
<dbReference type="PDB" id="7O1A">
    <property type="method" value="EM"/>
    <property type="resolution" value="2.40 A"/>
    <property type="chains" value="AC=1-233"/>
</dbReference>
<dbReference type="PDB" id="7O1C">
    <property type="method" value="EM"/>
    <property type="resolution" value="2.60 A"/>
    <property type="chains" value="AC=1-233"/>
</dbReference>
<dbReference type="PDB" id="7OE0">
    <property type="method" value="EM"/>
    <property type="resolution" value="2.69 A"/>
    <property type="chains" value="C=2-233"/>
</dbReference>
<dbReference type="PDB" id="7OE1">
    <property type="method" value="EM"/>
    <property type="resolution" value="3.05 A"/>
    <property type="chains" value="C=2-233"/>
</dbReference>
<dbReference type="PDB" id="7OIZ">
    <property type="method" value="EM"/>
    <property type="resolution" value="2.90 A"/>
    <property type="chains" value="C=1-233"/>
</dbReference>
<dbReference type="PDB" id="7OJ0">
    <property type="method" value="EM"/>
    <property type="resolution" value="3.50 A"/>
    <property type="chains" value="C=1-233"/>
</dbReference>
<dbReference type="PDB" id="7P3K">
    <property type="method" value="EM"/>
    <property type="resolution" value="2.90 A"/>
    <property type="chains" value="C=1-233"/>
</dbReference>
<dbReference type="PDB" id="7PJU">
    <property type="method" value="EM"/>
    <property type="resolution" value="9.50 A"/>
    <property type="chains" value="c=1-233"/>
</dbReference>
<dbReference type="PDB" id="7PJV">
    <property type="method" value="EM"/>
    <property type="resolution" value="3.10 A"/>
    <property type="chains" value="c=1-233"/>
</dbReference>
<dbReference type="PDB" id="7PJY">
    <property type="method" value="EM"/>
    <property type="resolution" value="3.10 A"/>
    <property type="chains" value="c=1-233"/>
</dbReference>
<dbReference type="PDB" id="7QG8">
    <property type="method" value="EM"/>
    <property type="resolution" value="3.97 A"/>
    <property type="chains" value="2=1-218"/>
</dbReference>
<dbReference type="PDB" id="7QGN">
    <property type="method" value="EM"/>
    <property type="resolution" value="3.37 A"/>
    <property type="chains" value="2=1-218"/>
</dbReference>
<dbReference type="PDB" id="7QGR">
    <property type="method" value="EM"/>
    <property type="resolution" value="5.70 A"/>
    <property type="chains" value="2=1-218"/>
</dbReference>
<dbReference type="PDB" id="7S1G">
    <property type="method" value="EM"/>
    <property type="resolution" value="2.48 A"/>
    <property type="chains" value="E=1-233"/>
</dbReference>
<dbReference type="PDB" id="7S1H">
    <property type="method" value="EM"/>
    <property type="resolution" value="2.35 A"/>
    <property type="chains" value="E=1-233"/>
</dbReference>
<dbReference type="PDB" id="7S1I">
    <property type="method" value="EM"/>
    <property type="resolution" value="2.48 A"/>
    <property type="chains" value="E=1-233"/>
</dbReference>
<dbReference type="PDB" id="7S1J">
    <property type="method" value="EM"/>
    <property type="resolution" value="2.47 A"/>
    <property type="chains" value="E=1-233"/>
</dbReference>
<dbReference type="PDB" id="7S1K">
    <property type="method" value="EM"/>
    <property type="resolution" value="2.42 A"/>
    <property type="chains" value="E=1-233"/>
</dbReference>
<dbReference type="PDB" id="7SA4">
    <property type="method" value="EM"/>
    <property type="resolution" value="2.55 A"/>
    <property type="chains" value="h=1-233"/>
</dbReference>
<dbReference type="PDB" id="7SS9">
    <property type="method" value="EM"/>
    <property type="resolution" value="3.90 A"/>
    <property type="chains" value="H=2-207"/>
</dbReference>
<dbReference type="PDB" id="7SSD">
    <property type="method" value="EM"/>
    <property type="resolution" value="3.30 A"/>
    <property type="chains" value="H=2-207"/>
</dbReference>
<dbReference type="PDB" id="7SSL">
    <property type="method" value="EM"/>
    <property type="resolution" value="3.80 A"/>
    <property type="chains" value="H=2-207"/>
</dbReference>
<dbReference type="PDB" id="7SSN">
    <property type="method" value="EM"/>
    <property type="resolution" value="3.20 A"/>
    <property type="chains" value="H=2-207"/>
</dbReference>
<dbReference type="PDB" id="7SSO">
    <property type="method" value="EM"/>
    <property type="resolution" value="3.20 A"/>
    <property type="chains" value="H=2-207"/>
</dbReference>
<dbReference type="PDB" id="7SSW">
    <property type="method" value="EM"/>
    <property type="resolution" value="3.80 A"/>
    <property type="chains" value="H=2-207"/>
</dbReference>
<dbReference type="PDB" id="7ST2">
    <property type="method" value="EM"/>
    <property type="resolution" value="2.90 A"/>
    <property type="chains" value="H=2-207"/>
</dbReference>
<dbReference type="PDB" id="7ST6">
    <property type="method" value="EM"/>
    <property type="resolution" value="3.00 A"/>
    <property type="chains" value="H=2-207"/>
</dbReference>
<dbReference type="PDB" id="7ST7">
    <property type="method" value="EM"/>
    <property type="resolution" value="3.20 A"/>
    <property type="chains" value="H=2-207"/>
</dbReference>
<dbReference type="PDB" id="7TOS">
    <property type="method" value="EM"/>
    <property type="resolution" value="2.90 A"/>
    <property type="chains" value="S03=2-207"/>
</dbReference>
<dbReference type="PDB" id="7UG7">
    <property type="method" value="EM"/>
    <property type="resolution" value="2.58 A"/>
    <property type="chains" value="SC=1-233"/>
</dbReference>
<dbReference type="PDB" id="7UPH">
    <property type="method" value="EM"/>
    <property type="resolution" value="4.18 A"/>
    <property type="chains" value="X=2-207"/>
</dbReference>
<dbReference type="PDB" id="7Y7C">
    <property type="method" value="EM"/>
    <property type="resolution" value="2.51 A"/>
    <property type="chains" value="C=1-233"/>
</dbReference>
<dbReference type="PDB" id="7Y7D">
    <property type="method" value="EM"/>
    <property type="resolution" value="2.58 A"/>
    <property type="chains" value="C=1-233"/>
</dbReference>
<dbReference type="PDB" id="7Y7E">
    <property type="method" value="EM"/>
    <property type="resolution" value="2.41 A"/>
    <property type="chains" value="C=1-233"/>
</dbReference>
<dbReference type="PDB" id="7Y7F">
    <property type="method" value="EM"/>
    <property type="resolution" value="2.43 A"/>
    <property type="chains" value="C=1-233"/>
</dbReference>
<dbReference type="PDB" id="7Y7G">
    <property type="method" value="EM"/>
    <property type="resolution" value="2.34 A"/>
    <property type="chains" value="C=1-233"/>
</dbReference>
<dbReference type="PDB" id="7Y7H">
    <property type="method" value="EM"/>
    <property type="resolution" value="2.51 A"/>
    <property type="chains" value="C=1-233"/>
</dbReference>
<dbReference type="PDB" id="7ZTA">
    <property type="method" value="EM"/>
    <property type="resolution" value="2.70 A"/>
    <property type="chains" value="S031=2-207"/>
</dbReference>
<dbReference type="PDB" id="8A3L">
    <property type="method" value="EM"/>
    <property type="resolution" value="3.42 A"/>
    <property type="chains" value="C=2-207"/>
</dbReference>
<dbReference type="PDB" id="8AKN">
    <property type="method" value="EM"/>
    <property type="resolution" value="2.30 A"/>
    <property type="chains" value="D=1-233"/>
</dbReference>
<dbReference type="PDB" id="8AM9">
    <property type="method" value="EM"/>
    <property type="resolution" value="2.80 A"/>
    <property type="chains" value="D=1-233"/>
</dbReference>
<dbReference type="PDB" id="8AYE">
    <property type="method" value="EM"/>
    <property type="resolution" value="1.96 A"/>
    <property type="chains" value="C=1-233"/>
</dbReference>
<dbReference type="PDB" id="8B0X">
    <property type="method" value="EM"/>
    <property type="resolution" value="1.55 A"/>
    <property type="chains" value="C=1-233"/>
</dbReference>
<dbReference type="PDB" id="8B7Y">
    <property type="method" value="EM"/>
    <property type="resolution" value="3.00 A"/>
    <property type="chains" value="E=1-233"/>
</dbReference>
<dbReference type="PDB" id="8BF7">
    <property type="method" value="EM"/>
    <property type="resolution" value="2.33 A"/>
    <property type="chains" value="g=1-233"/>
</dbReference>
<dbReference type="PDB" id="8BGE">
    <property type="method" value="EM"/>
    <property type="resolution" value="2.11 A"/>
    <property type="chains" value="g=1-233"/>
</dbReference>
<dbReference type="PDB" id="8BGH">
    <property type="method" value="EM"/>
    <property type="resolution" value="2.88 A"/>
    <property type="chains" value="g=1-233"/>
</dbReference>
<dbReference type="PDB" id="8BH4">
    <property type="method" value="EM"/>
    <property type="resolution" value="2.62 A"/>
    <property type="chains" value="g=1-233"/>
</dbReference>
<dbReference type="PDB" id="8BHJ">
    <property type="method" value="EM"/>
    <property type="resolution" value="2.81 A"/>
    <property type="chains" value="g=1-233"/>
</dbReference>
<dbReference type="PDB" id="8BHL">
    <property type="method" value="EM"/>
    <property type="resolution" value="2.21 A"/>
    <property type="chains" value="g=1-233"/>
</dbReference>
<dbReference type="PDB" id="8BHN">
    <property type="method" value="EM"/>
    <property type="resolution" value="2.85 A"/>
    <property type="chains" value="g=1-233"/>
</dbReference>
<dbReference type="PDB" id="8BHP">
    <property type="method" value="EM"/>
    <property type="resolution" value="2.37 A"/>
    <property type="chains" value="g=1-233"/>
</dbReference>
<dbReference type="PDB" id="8BIL">
    <property type="method" value="EM"/>
    <property type="resolution" value="2.04 A"/>
    <property type="chains" value="g=1-233"/>
</dbReference>
<dbReference type="PDB" id="8BIM">
    <property type="method" value="EM"/>
    <property type="resolution" value="2.04 A"/>
    <property type="chains" value="g=1-233"/>
</dbReference>
<dbReference type="PDB" id="8CA7">
    <property type="method" value="EM"/>
    <property type="resolution" value="2.06 A"/>
    <property type="chains" value="C=1-233"/>
</dbReference>
<dbReference type="PDB" id="8CAI">
    <property type="method" value="EM"/>
    <property type="resolution" value="2.08 A"/>
    <property type="chains" value="C=1-233"/>
</dbReference>
<dbReference type="PDB" id="8CAZ">
    <property type="method" value="EM"/>
    <property type="resolution" value="2.11 A"/>
    <property type="chains" value="C=1-233"/>
</dbReference>
<dbReference type="PDB" id="8CF1">
    <property type="method" value="EM"/>
    <property type="resolution" value="1.82 A"/>
    <property type="chains" value="C=1-233"/>
</dbReference>
<dbReference type="PDB" id="8CF8">
    <property type="method" value="EM"/>
    <property type="resolution" value="2.20 A"/>
    <property type="chains" value="C=1-233"/>
</dbReference>
<dbReference type="PDB" id="8CGI">
    <property type="method" value="EM"/>
    <property type="resolution" value="1.89 A"/>
    <property type="chains" value="C=1-233"/>
</dbReference>
<dbReference type="PDB" id="8CGJ">
    <property type="method" value="EM"/>
    <property type="resolution" value="1.79 A"/>
    <property type="chains" value="C=1-233"/>
</dbReference>
<dbReference type="PDB" id="8EIU">
    <property type="method" value="EM"/>
    <property type="resolution" value="2.24 A"/>
    <property type="chains" value="C=1-233"/>
</dbReference>
<dbReference type="PDB" id="8EKC">
    <property type="method" value="EM"/>
    <property type="resolution" value="2.70 A"/>
    <property type="chains" value="c=1-233"/>
</dbReference>
<dbReference type="PDB" id="8EMM">
    <property type="method" value="EM"/>
    <property type="resolution" value="2.10 A"/>
    <property type="chains" value="C=1-233"/>
</dbReference>
<dbReference type="PDB" id="8EYQ">
    <property type="method" value="EM"/>
    <property type="resolution" value="3.30 A"/>
    <property type="chains" value="C=1-233"/>
</dbReference>
<dbReference type="PDB" id="8EYT">
    <property type="method" value="EM"/>
    <property type="resolution" value="2.80 A"/>
    <property type="chains" value="F=1-233"/>
</dbReference>
<dbReference type="PDB" id="8FIZ">
    <property type="method" value="EM"/>
    <property type="resolution" value="3.80 A"/>
    <property type="chains" value="AG=1-233"/>
</dbReference>
<dbReference type="PDB" id="8FTO">
    <property type="method" value="EM"/>
    <property type="resolution" value="1.85 A"/>
    <property type="chains" value="C=1-233"/>
</dbReference>
<dbReference type="PDB" id="8FZD">
    <property type="method" value="EM"/>
    <property type="resolution" value="3.10 A"/>
    <property type="chains" value="c=1-233"/>
</dbReference>
<dbReference type="PDB" id="8FZE">
    <property type="method" value="EM"/>
    <property type="resolution" value="3.00 A"/>
    <property type="chains" value="c=1-233"/>
</dbReference>
<dbReference type="PDB" id="8FZF">
    <property type="method" value="EM"/>
    <property type="resolution" value="3.20 A"/>
    <property type="chains" value="c=1-233"/>
</dbReference>
<dbReference type="PDB" id="8FZG">
    <property type="method" value="EM"/>
    <property type="resolution" value="3.10 A"/>
    <property type="chains" value="c=1-233"/>
</dbReference>
<dbReference type="PDB" id="8FZH">
    <property type="method" value="EM"/>
    <property type="resolution" value="2.90 A"/>
    <property type="chains" value="c=1-233"/>
</dbReference>
<dbReference type="PDB" id="8FZI">
    <property type="method" value="EM"/>
    <property type="resolution" value="3.10 A"/>
    <property type="chains" value="c=1-233"/>
</dbReference>
<dbReference type="PDB" id="8FZJ">
    <property type="method" value="EM"/>
    <property type="resolution" value="3.00 A"/>
    <property type="chains" value="c=1-233"/>
</dbReference>
<dbReference type="PDB" id="8G2U">
    <property type="method" value="EM"/>
    <property type="resolution" value="3.00 A"/>
    <property type="chains" value="b=2-207"/>
</dbReference>
<dbReference type="PDB" id="8G31">
    <property type="method" value="EM"/>
    <property type="resolution" value="3.20 A"/>
    <property type="chains" value="x=2-207"/>
</dbReference>
<dbReference type="PDB" id="8G34">
    <property type="method" value="EM"/>
    <property type="resolution" value="3.20 A"/>
    <property type="chains" value="x=2-207"/>
</dbReference>
<dbReference type="PDB" id="8G38">
    <property type="method" value="EM"/>
    <property type="resolution" value="3.20 A"/>
    <property type="chains" value="x=2-207"/>
</dbReference>
<dbReference type="PDB" id="8G6W">
    <property type="method" value="EM"/>
    <property type="resolution" value="2.02 A"/>
    <property type="chains" value="C=1-233"/>
</dbReference>
<dbReference type="PDB" id="8G7P">
    <property type="method" value="EM"/>
    <property type="resolution" value="2.90 A"/>
    <property type="chains" value="c=1-233"/>
</dbReference>
<dbReference type="PDB" id="8G7Q">
    <property type="method" value="EM"/>
    <property type="resolution" value="3.10 A"/>
    <property type="chains" value="c=1-233"/>
</dbReference>
<dbReference type="PDB" id="8G7R">
    <property type="method" value="EM"/>
    <property type="resolution" value="2.80 A"/>
    <property type="chains" value="c=1-233"/>
</dbReference>
<dbReference type="PDB" id="8G7S">
    <property type="method" value="EM"/>
    <property type="resolution" value="3.10 A"/>
    <property type="chains" value="c=1-233"/>
</dbReference>
<dbReference type="PDB" id="8GHU">
    <property type="method" value="EM"/>
    <property type="resolution" value="3.00 A"/>
    <property type="chains" value="c=2-207"/>
</dbReference>
<dbReference type="PDB" id="8HSP">
    <property type="method" value="EM"/>
    <property type="resolution" value="2.32 A"/>
    <property type="chains" value="C=1-233"/>
</dbReference>
<dbReference type="PDB" id="8HTZ">
    <property type="method" value="EM"/>
    <property type="resolution" value="2.40 A"/>
    <property type="chains" value="C=1-233"/>
</dbReference>
<dbReference type="PDB" id="8HU1">
    <property type="method" value="EM"/>
    <property type="resolution" value="2.69 A"/>
    <property type="chains" value="C=1-233"/>
</dbReference>
<dbReference type="PDB" id="8IFB">
    <property type="method" value="EM"/>
    <property type="resolution" value="2.43 A"/>
    <property type="chains" value="C=1-233"/>
</dbReference>
<dbReference type="PDB" id="8IFC">
    <property type="method" value="EM"/>
    <property type="resolution" value="2.90 A"/>
    <property type="chains" value="C=1-233"/>
</dbReference>
<dbReference type="PDB" id="8JSG">
    <property type="method" value="EM"/>
    <property type="resolution" value="4.60 A"/>
    <property type="chains" value="h=2-207"/>
</dbReference>
<dbReference type="PDB" id="8K3O">
    <property type="method" value="EM"/>
    <property type="resolution" value="3.88 A"/>
    <property type="chains" value="C=1-233"/>
</dbReference>
<dbReference type="PDB" id="8K4E">
    <property type="method" value="EM"/>
    <property type="resolution" value="3.40 A"/>
    <property type="chains" value="C=1-233"/>
</dbReference>
<dbReference type="PDB" id="8P16">
    <property type="method" value="EM"/>
    <property type="resolution" value="2.77 A"/>
    <property type="chains" value="h=1-233"/>
</dbReference>
<dbReference type="PDB" id="8P17">
    <property type="method" value="EM"/>
    <property type="resolution" value="2.78 A"/>
    <property type="chains" value="h=1-233"/>
</dbReference>
<dbReference type="PDB" id="8P18">
    <property type="method" value="EM"/>
    <property type="resolution" value="2.77 A"/>
    <property type="chains" value="h=1-233"/>
</dbReference>
<dbReference type="PDB" id="8PEG">
    <property type="method" value="EM"/>
    <property type="resolution" value="3.30 A"/>
    <property type="chains" value="C=1-233"/>
</dbReference>
<dbReference type="PDB" id="8PHJ">
    <property type="method" value="EM"/>
    <property type="resolution" value="3.67 A"/>
    <property type="chains" value="C=1-233"/>
</dbReference>
<dbReference type="PDB" id="8PKL">
    <property type="method" value="EM"/>
    <property type="resolution" value="3.09 A"/>
    <property type="chains" value="C=1-233"/>
</dbReference>
<dbReference type="PDB" id="8PVA">
    <property type="method" value="EM"/>
    <property type="resolution" value="4.50 A"/>
    <property type="chains" value="C=1-233"/>
</dbReference>
<dbReference type="PDB" id="8Q4F">
    <property type="method" value="EM"/>
    <property type="resolution" value="3.10 A"/>
    <property type="chains" value="C=1-233"/>
</dbReference>
<dbReference type="PDB" id="8QK7">
    <property type="method" value="EM"/>
    <property type="resolution" value="2.77 A"/>
    <property type="chains" value="h=1-233"/>
</dbReference>
<dbReference type="PDB" id="8QOA">
    <property type="method" value="EM"/>
    <property type="resolution" value="2.00 A"/>
    <property type="chains" value="C=1-233"/>
</dbReference>
<dbReference type="PDB" id="8R3V">
    <property type="method" value="EM"/>
    <property type="resolution" value="3.28 A"/>
    <property type="chains" value="C1/C2=1-233"/>
</dbReference>
<dbReference type="PDB" id="8R6C">
    <property type="method" value="EM"/>
    <property type="resolution" value="2.20 A"/>
    <property type="chains" value="C=1-233"/>
</dbReference>
<dbReference type="PDB" id="8R8M">
    <property type="method" value="EM"/>
    <property type="resolution" value="2.40 A"/>
    <property type="chains" value="C=1-233"/>
</dbReference>
<dbReference type="PDB" id="8RCL">
    <property type="method" value="EM"/>
    <property type="resolution" value="3.49 A"/>
    <property type="chains" value="C1/C2=1-233"/>
</dbReference>
<dbReference type="PDB" id="8RCM">
    <property type="method" value="EM"/>
    <property type="resolution" value="3.59 A"/>
    <property type="chains" value="C1/C2=1-233"/>
</dbReference>
<dbReference type="PDB" id="8RCS">
    <property type="method" value="EM"/>
    <property type="resolution" value="4.46 A"/>
    <property type="chains" value="C1/C2=1-233"/>
</dbReference>
<dbReference type="PDB" id="8RCT">
    <property type="method" value="EM"/>
    <property type="resolution" value="5.32 A"/>
    <property type="chains" value="C1/C2=1-233"/>
</dbReference>
<dbReference type="PDB" id="8SYL">
    <property type="method" value="EM"/>
    <property type="resolution" value="2.90 A"/>
    <property type="chains" value="c=1-233"/>
</dbReference>
<dbReference type="PDB" id="8T5D">
    <property type="method" value="EM"/>
    <property type="resolution" value="3.20 A"/>
    <property type="chains" value="b=2-207"/>
</dbReference>
<dbReference type="PDB" id="8T5H">
    <property type="method" value="EM"/>
    <property type="resolution" value="3.30 A"/>
    <property type="chains" value="b=2-207"/>
</dbReference>
<dbReference type="PDB" id="8UPO">
    <property type="method" value="EM"/>
    <property type="resolution" value="5.50 A"/>
    <property type="chains" value="I=1-233"/>
</dbReference>
<dbReference type="PDB" id="8UPR">
    <property type="method" value="EM"/>
    <property type="resolution" value="5.30 A"/>
    <property type="chains" value="I=1-233"/>
</dbReference>
<dbReference type="PDB" id="8UQL">
    <property type="method" value="EM"/>
    <property type="resolution" value="3.20 A"/>
    <property type="chains" value="I=1-233"/>
</dbReference>
<dbReference type="PDB" id="8UQM">
    <property type="method" value="EM"/>
    <property type="resolution" value="5.30 A"/>
    <property type="chains" value="I=1-233"/>
</dbReference>
<dbReference type="PDB" id="8UQP">
    <property type="method" value="EM"/>
    <property type="resolution" value="3.80 A"/>
    <property type="chains" value="I=1-233"/>
</dbReference>
<dbReference type="PDB" id="8UR0">
    <property type="method" value="EM"/>
    <property type="resolution" value="3.40 A"/>
    <property type="chains" value="I=1-233"/>
</dbReference>
<dbReference type="PDB" id="8URH">
    <property type="method" value="EM"/>
    <property type="resolution" value="5.70 A"/>
    <property type="chains" value="I=1-233"/>
</dbReference>
<dbReference type="PDB" id="8URI">
    <property type="method" value="EM"/>
    <property type="resolution" value="5.30 A"/>
    <property type="chains" value="I=1-233"/>
</dbReference>
<dbReference type="PDB" id="8URX">
    <property type="method" value="EM"/>
    <property type="resolution" value="6.60 A"/>
    <property type="chains" value="I=1-233"/>
</dbReference>
<dbReference type="PDB" id="8URY">
    <property type="method" value="EM"/>
    <property type="resolution" value="3.10 A"/>
    <property type="chains" value="I=1-233"/>
</dbReference>
<dbReference type="PDB" id="8VS9">
    <property type="method" value="EM"/>
    <property type="resolution" value="3.90 A"/>
    <property type="chains" value="S03=1-233"/>
</dbReference>
<dbReference type="PDB" id="8VSA">
    <property type="method" value="EM"/>
    <property type="resolution" value="3.70 A"/>
    <property type="chains" value="S03=1-233"/>
</dbReference>
<dbReference type="PDB" id="8YUO">
    <property type="method" value="EM"/>
    <property type="resolution" value="2.25 A"/>
    <property type="chains" value="C=1-233"/>
</dbReference>
<dbReference type="PDB" id="8YUP">
    <property type="method" value="EM"/>
    <property type="resolution" value="2.39 A"/>
    <property type="chains" value="C=1-233"/>
</dbReference>
<dbReference type="PDB" id="8YUQ">
    <property type="method" value="EM"/>
    <property type="resolution" value="2.41 A"/>
    <property type="chains" value="C=1-233"/>
</dbReference>
<dbReference type="PDB" id="8YUR">
    <property type="method" value="EM"/>
    <property type="resolution" value="2.47 A"/>
    <property type="chains" value="C=1-233"/>
</dbReference>
<dbReference type="PDB" id="8YUS">
    <property type="method" value="EM"/>
    <property type="resolution" value="2.43 A"/>
    <property type="chains" value="C=1-233"/>
</dbReference>
<dbReference type="PDB" id="9AX7">
    <property type="method" value="EM"/>
    <property type="resolution" value="2.63 A"/>
    <property type="chains" value="C=1-233"/>
</dbReference>
<dbReference type="PDB" id="9AX8">
    <property type="method" value="EM"/>
    <property type="resolution" value="2.60 A"/>
    <property type="chains" value="c=2-207"/>
</dbReference>
<dbReference type="PDB" id="9CG5">
    <property type="method" value="EM"/>
    <property type="resolution" value="2.59 A"/>
    <property type="chains" value="C=1-233"/>
</dbReference>
<dbReference type="PDB" id="9CG6">
    <property type="method" value="EM"/>
    <property type="resolution" value="2.61 A"/>
    <property type="chains" value="C=1-233"/>
</dbReference>
<dbReference type="PDB" id="9CG7">
    <property type="method" value="EM"/>
    <property type="resolution" value="2.75 A"/>
    <property type="chains" value="C=1-233"/>
</dbReference>
<dbReference type="PDB" id="9DUK">
    <property type="method" value="EM"/>
    <property type="resolution" value="2.56 A"/>
    <property type="chains" value="C=1-233"/>
</dbReference>
<dbReference type="PDB" id="9DUL">
    <property type="method" value="EM"/>
    <property type="resolution" value="2.56 A"/>
    <property type="chains" value="C=1-233"/>
</dbReference>
<dbReference type="PDB" id="9FBV">
    <property type="method" value="EM"/>
    <property type="resolution" value="2.40 A"/>
    <property type="chains" value="C=1-233"/>
</dbReference>
<dbReference type="PDB" id="9GFT">
    <property type="method" value="EM"/>
    <property type="resolution" value="3.10 A"/>
    <property type="chains" value="2/AC=1-233"/>
</dbReference>
<dbReference type="PDB" id="9GGR">
    <property type="method" value="EM"/>
    <property type="resolution" value="3.20 A"/>
    <property type="chains" value="2/AC=1-233"/>
</dbReference>
<dbReference type="PDB" id="9GUQ">
    <property type="method" value="EM"/>
    <property type="resolution" value="3.10 A"/>
    <property type="chains" value="D=1-233"/>
</dbReference>
<dbReference type="PDB" id="9MOR">
    <property type="method" value="EM"/>
    <property type="resolution" value="2.65 A"/>
    <property type="chains" value="h=1-233"/>
</dbReference>
<dbReference type="PDB" id="9MQ4">
    <property type="method" value="EM"/>
    <property type="resolution" value="2.78 A"/>
    <property type="chains" value="h=1-233"/>
</dbReference>
<dbReference type="PDBsum" id="2YKR"/>
<dbReference type="PDBsum" id="3J9Y"/>
<dbReference type="PDBsum" id="3J9Z"/>
<dbReference type="PDBsum" id="3JA1"/>
<dbReference type="PDBsum" id="3JBU"/>
<dbReference type="PDBsum" id="3JBV"/>
<dbReference type="PDBsum" id="3JCD"/>
<dbReference type="PDBsum" id="3JCE"/>
<dbReference type="PDBsum" id="3JCJ"/>
<dbReference type="PDBsum" id="3JCN"/>
<dbReference type="PDBsum" id="4A2I"/>
<dbReference type="PDBsum" id="4ADV"/>
<dbReference type="PDBsum" id="4ODQ"/>
<dbReference type="PDBsum" id="4U1U"/>
<dbReference type="PDBsum" id="4U1V"/>
<dbReference type="PDBsum" id="4U20"/>
<dbReference type="PDBsum" id="4U24"/>
<dbReference type="PDBsum" id="4U25"/>
<dbReference type="PDBsum" id="4U26"/>
<dbReference type="PDBsum" id="4U27"/>
<dbReference type="PDBsum" id="4V47"/>
<dbReference type="PDBsum" id="4V48"/>
<dbReference type="PDBsum" id="4V4H"/>
<dbReference type="PDBsum" id="4V4Q"/>
<dbReference type="PDBsum" id="4V4V"/>
<dbReference type="PDBsum" id="4V4W"/>
<dbReference type="PDBsum" id="4V50"/>
<dbReference type="PDBsum" id="4V52"/>
<dbReference type="PDBsum" id="4V53"/>
<dbReference type="PDBsum" id="4V54"/>
<dbReference type="PDBsum" id="4V55"/>
<dbReference type="PDBsum" id="4V56"/>
<dbReference type="PDBsum" id="4V57"/>
<dbReference type="PDBsum" id="4V5B"/>
<dbReference type="PDBsum" id="4V5H"/>
<dbReference type="PDBsum" id="4V5Y"/>
<dbReference type="PDBsum" id="4V64"/>
<dbReference type="PDBsum" id="4V65"/>
<dbReference type="PDBsum" id="4V66"/>
<dbReference type="PDBsum" id="4V69"/>
<dbReference type="PDBsum" id="4V6C"/>
<dbReference type="PDBsum" id="4V6D"/>
<dbReference type="PDBsum" id="4V6E"/>
<dbReference type="PDBsum" id="4V6K"/>
<dbReference type="PDBsum" id="4V6L"/>
<dbReference type="PDBsum" id="4V6M"/>
<dbReference type="PDBsum" id="4V6N"/>
<dbReference type="PDBsum" id="4V6O"/>
<dbReference type="PDBsum" id="4V6P"/>
<dbReference type="PDBsum" id="4V6Q"/>
<dbReference type="PDBsum" id="4V6R"/>
<dbReference type="PDBsum" id="4V6S"/>
<dbReference type="PDBsum" id="4V6T"/>
<dbReference type="PDBsum" id="4V6V"/>
<dbReference type="PDBsum" id="4V6Y"/>
<dbReference type="PDBsum" id="4V6Z"/>
<dbReference type="PDBsum" id="4V70"/>
<dbReference type="PDBsum" id="4V71"/>
<dbReference type="PDBsum" id="4V72"/>
<dbReference type="PDBsum" id="4V73"/>
<dbReference type="PDBsum" id="4V74"/>
<dbReference type="PDBsum" id="4V75"/>
<dbReference type="PDBsum" id="4V76"/>
<dbReference type="PDBsum" id="4V77"/>
<dbReference type="PDBsum" id="4V78"/>
<dbReference type="PDBsum" id="4V79"/>
<dbReference type="PDBsum" id="4V7A"/>
<dbReference type="PDBsum" id="4V7B"/>
<dbReference type="PDBsum" id="4V7C"/>
<dbReference type="PDBsum" id="4V7D"/>
<dbReference type="PDBsum" id="4V7I"/>
<dbReference type="PDBsum" id="4V7S"/>
<dbReference type="PDBsum" id="4V7T"/>
<dbReference type="PDBsum" id="4V7U"/>
<dbReference type="PDBsum" id="4V7V"/>
<dbReference type="PDBsum" id="4V85"/>
<dbReference type="PDBsum" id="4V89"/>
<dbReference type="PDBsum" id="4V9C"/>
<dbReference type="PDBsum" id="4V9D"/>
<dbReference type="PDBsum" id="4V9O"/>
<dbReference type="PDBsum" id="4V9P"/>
<dbReference type="PDBsum" id="4WF1"/>
<dbReference type="PDBsum" id="4WOI"/>
<dbReference type="PDBsum" id="4WWW"/>
<dbReference type="PDBsum" id="4YBB"/>
<dbReference type="PDBsum" id="5AFI"/>
<dbReference type="PDBsum" id="5H5U"/>
<dbReference type="PDBsum" id="5IQR"/>
<dbReference type="PDBsum" id="5IT8"/>
<dbReference type="PDBsum" id="5J5B"/>
<dbReference type="PDBsum" id="5J7L"/>
<dbReference type="PDBsum" id="5J88"/>
<dbReference type="PDBsum" id="5J8A"/>
<dbReference type="PDBsum" id="5J91"/>
<dbReference type="PDBsum" id="5JC9"/>
<dbReference type="PDBsum" id="5JTE"/>
<dbReference type="PDBsum" id="5JU8"/>
<dbReference type="PDBsum" id="5KCR"/>
<dbReference type="PDBsum" id="5KCS"/>
<dbReference type="PDBsum" id="5KPS"/>
<dbReference type="PDBsum" id="5KPV"/>
<dbReference type="PDBsum" id="5KPW"/>
<dbReference type="PDBsum" id="5KPX"/>
<dbReference type="PDBsum" id="5L3P"/>
<dbReference type="PDBsum" id="5LZA"/>
<dbReference type="PDBsum" id="5LZB"/>
<dbReference type="PDBsum" id="5LZC"/>
<dbReference type="PDBsum" id="5LZD"/>
<dbReference type="PDBsum" id="5LZE"/>
<dbReference type="PDBsum" id="5LZF"/>
<dbReference type="PDBsum" id="5MDV"/>
<dbReference type="PDBsum" id="5MDW"/>
<dbReference type="PDBsum" id="5MDY"/>
<dbReference type="PDBsum" id="5MDZ"/>
<dbReference type="PDBsum" id="5ME0"/>
<dbReference type="PDBsum" id="5ME1"/>
<dbReference type="PDBsum" id="5MGP"/>
<dbReference type="PDBsum" id="5MY1"/>
<dbReference type="PDBsum" id="5NO4"/>
<dbReference type="PDBsum" id="5NP6"/>
<dbReference type="PDBsum" id="5NWY"/>
<dbReference type="PDBsum" id="5O2R"/>
<dbReference type="PDBsum" id="5U4I"/>
<dbReference type="PDBsum" id="5U4J"/>
<dbReference type="PDBsum" id="5U9F"/>
<dbReference type="PDBsum" id="5U9G"/>
<dbReference type="PDBsum" id="5UYK"/>
<dbReference type="PDBsum" id="5UYL"/>
<dbReference type="PDBsum" id="5UYM"/>
<dbReference type="PDBsum" id="5UYN"/>
<dbReference type="PDBsum" id="5UYP"/>
<dbReference type="PDBsum" id="5UYQ"/>
<dbReference type="PDBsum" id="5UZ4"/>
<dbReference type="PDBsum" id="5WDT"/>
<dbReference type="PDBsum" id="5WE4"/>
<dbReference type="PDBsum" id="5WE6"/>
<dbReference type="PDBsum" id="5WF0"/>
<dbReference type="PDBsum" id="5WFK"/>
<dbReference type="PDBsum" id="5WFS"/>
<dbReference type="PDBsum" id="6AWB"/>
<dbReference type="PDBsum" id="6AWC"/>
<dbReference type="PDBsum" id="6AWD"/>
<dbReference type="PDBsum" id="6BU8"/>
<dbReference type="PDBsum" id="6BY1"/>
<dbReference type="PDBsum" id="6C4I"/>
<dbReference type="PDBsum" id="6DNC"/>
<dbReference type="PDBsum" id="6ENF"/>
<dbReference type="PDBsum" id="6ENJ"/>
<dbReference type="PDBsum" id="6ENU"/>
<dbReference type="PDBsum" id="6GWT"/>
<dbReference type="PDBsum" id="6GXM"/>
<dbReference type="PDBsum" id="6GXN"/>
<dbReference type="PDBsum" id="6GXO"/>
<dbReference type="PDBsum" id="6GXP"/>
<dbReference type="PDBsum" id="6H4N"/>
<dbReference type="PDBsum" id="6H58"/>
<dbReference type="PDBsum" id="6HRM"/>
<dbReference type="PDBsum" id="6I7V"/>
<dbReference type="PDBsum" id="6NQB"/>
<dbReference type="PDBsum" id="6O7K"/>
<dbReference type="PDBsum" id="6O9J"/>
<dbReference type="PDBsum" id="6O9K"/>
<dbReference type="PDBsum" id="6OFX"/>
<dbReference type="PDBsum" id="6OG7"/>
<dbReference type="PDBsum" id="6OGF"/>
<dbReference type="PDBsum" id="6OGG"/>
<dbReference type="PDBsum" id="6OGI"/>
<dbReference type="PDBsum" id="6OM6"/>
<dbReference type="PDBsum" id="6ORE"/>
<dbReference type="PDBsum" id="6ORL"/>
<dbReference type="PDBsum" id="6OSK"/>
<dbReference type="PDBsum" id="6OSQ"/>
<dbReference type="PDBsum" id="6OST"/>
<dbReference type="PDBsum" id="6OT3"/>
<dbReference type="PDBsum" id="6OUO"/>
<dbReference type="PDBsum" id="6Q97"/>
<dbReference type="PDBsum" id="6Q98"/>
<dbReference type="PDBsum" id="6Q9A"/>
<dbReference type="PDBsum" id="6SZS"/>
<dbReference type="PDBsum" id="6TBV"/>
<dbReference type="PDBsum" id="6TC3"/>
<dbReference type="PDBsum" id="6VU3"/>
<dbReference type="PDBsum" id="6VWL"/>
<dbReference type="PDBsum" id="6VWM"/>
<dbReference type="PDBsum" id="6VWN"/>
<dbReference type="PDBsum" id="6VYQ"/>
<dbReference type="PDBsum" id="6VYR"/>
<dbReference type="PDBsum" id="6VYS"/>
<dbReference type="PDBsum" id="6VYT"/>
<dbReference type="PDBsum" id="6VYU"/>
<dbReference type="PDBsum" id="6VYW"/>
<dbReference type="PDBsum" id="6VYX"/>
<dbReference type="PDBsum" id="6VYY"/>
<dbReference type="PDBsum" id="6VYZ"/>
<dbReference type="PDBsum" id="6VZ2"/>
<dbReference type="PDBsum" id="6VZ3"/>
<dbReference type="PDBsum" id="6VZ5"/>
<dbReference type="PDBsum" id="6VZ7"/>
<dbReference type="PDBsum" id="6VZJ"/>
<dbReference type="PDBsum" id="6W6K"/>
<dbReference type="PDBsum" id="6W77"/>
<dbReference type="PDBsum" id="6W7M"/>
<dbReference type="PDBsum" id="6W7N"/>
<dbReference type="PDBsum" id="6WD0"/>
<dbReference type="PDBsum" id="6WD1"/>
<dbReference type="PDBsum" id="6WD2"/>
<dbReference type="PDBsum" id="6WD3"/>
<dbReference type="PDBsum" id="6WD4"/>
<dbReference type="PDBsum" id="6WD5"/>
<dbReference type="PDBsum" id="6WD6"/>
<dbReference type="PDBsum" id="6WD7"/>
<dbReference type="PDBsum" id="6WD8"/>
<dbReference type="PDBsum" id="6WD9"/>
<dbReference type="PDBsum" id="6WDA"/>
<dbReference type="PDBsum" id="6WDB"/>
<dbReference type="PDBsum" id="6WDC"/>
<dbReference type="PDBsum" id="6WDD"/>
<dbReference type="PDBsum" id="6WDE"/>
<dbReference type="PDBsum" id="6WDF"/>
<dbReference type="PDBsum" id="6WDG"/>
<dbReference type="PDBsum" id="6WDH"/>
<dbReference type="PDBsum" id="6WDI"/>
<dbReference type="PDBsum" id="6WDJ"/>
<dbReference type="PDBsum" id="6WDK"/>
<dbReference type="PDBsum" id="6WDL"/>
<dbReference type="PDBsum" id="6WDM"/>
<dbReference type="PDBsum" id="6WNV"/>
<dbReference type="PDBsum" id="6WNW"/>
<dbReference type="PDBsum" id="6X6T"/>
<dbReference type="PDBsum" id="6X7F"/>
<dbReference type="PDBsum" id="6X7K"/>
<dbReference type="PDBsum" id="6X9Q"/>
<dbReference type="PDBsum" id="6XDQ"/>
<dbReference type="PDBsum" id="6XDR"/>
<dbReference type="PDBsum" id="6XE0"/>
<dbReference type="PDBsum" id="6XGF"/>
<dbReference type="PDBsum" id="6XII"/>
<dbReference type="PDBsum" id="6XIJ"/>
<dbReference type="PDBsum" id="6XZA"/>
<dbReference type="PDBsum" id="6XZB"/>
<dbReference type="PDBsum" id="6Y69"/>
<dbReference type="PDBsum" id="6ZTJ"/>
<dbReference type="PDBsum" id="6ZTL"/>
<dbReference type="PDBsum" id="6ZTM"/>
<dbReference type="PDBsum" id="6ZTN"/>
<dbReference type="PDBsum" id="6ZTO"/>
<dbReference type="PDBsum" id="6ZTP"/>
<dbReference type="PDBsum" id="6ZU1"/>
<dbReference type="PDBsum" id="7ABZ"/>
<dbReference type="PDBsum" id="7AC7"/>
<dbReference type="PDBsum" id="7ACJ"/>
<dbReference type="PDBsum" id="7ACR"/>
<dbReference type="PDBsum" id="7AF3"/>
<dbReference type="PDBsum" id="7AF5"/>
<dbReference type="PDBsum" id="7AF8"/>
<dbReference type="PDBsum" id="7AFA"/>
<dbReference type="PDBsum" id="7AFD"/>
<dbReference type="PDBsum" id="7AFH"/>
<dbReference type="PDBsum" id="7AFK"/>
<dbReference type="PDBsum" id="7AFN"/>
<dbReference type="PDBsum" id="7B5K"/>
<dbReference type="PDBsum" id="7BOE"/>
<dbReference type="PDBsum" id="7BOH"/>
<dbReference type="PDBsum" id="7D6Z"/>
<dbReference type="PDBsum" id="7D80"/>
<dbReference type="PDBsum" id="7JSS"/>
<dbReference type="PDBsum" id="7JSW"/>
<dbReference type="PDBsum" id="7JSZ"/>
<dbReference type="PDBsum" id="7JT1"/>
<dbReference type="PDBsum" id="7JT2"/>
<dbReference type="PDBsum" id="7JT3"/>
<dbReference type="PDBsum" id="7K00"/>
<dbReference type="PDBsum" id="7K50"/>
<dbReference type="PDBsum" id="7K51"/>
<dbReference type="PDBsum" id="7K52"/>
<dbReference type="PDBsum" id="7K53"/>
<dbReference type="PDBsum" id="7K54"/>
<dbReference type="PDBsum" id="7K55"/>
<dbReference type="PDBsum" id="7LV0"/>
<dbReference type="PDBsum" id="7M5D"/>
<dbReference type="PDBsum" id="7N1P"/>
<dbReference type="PDBsum" id="7N2C"/>
<dbReference type="PDBsum" id="7N2U"/>
<dbReference type="PDBsum" id="7N2V"/>
<dbReference type="PDBsum" id="7N30"/>
<dbReference type="PDBsum" id="7N31"/>
<dbReference type="PDBsum" id="7NAR"/>
<dbReference type="PDBsum" id="7NAT"/>
<dbReference type="PDBsum" id="7NAU"/>
<dbReference type="PDBsum" id="7NAV"/>
<dbReference type="PDBsum" id="7NAX"/>
<dbReference type="PDBsum" id="7NBU"/>
<dbReference type="PDBsum" id="7O19"/>
<dbReference type="PDBsum" id="7O1A"/>
<dbReference type="PDBsum" id="7O1C"/>
<dbReference type="PDBsum" id="7OE0"/>
<dbReference type="PDBsum" id="7OE1"/>
<dbReference type="PDBsum" id="7OIZ"/>
<dbReference type="PDBsum" id="7OJ0"/>
<dbReference type="PDBsum" id="7P3K"/>
<dbReference type="PDBsum" id="7PJU"/>
<dbReference type="PDBsum" id="7PJV"/>
<dbReference type="PDBsum" id="7PJY"/>
<dbReference type="PDBsum" id="7QG8"/>
<dbReference type="PDBsum" id="7QGN"/>
<dbReference type="PDBsum" id="7QGR"/>
<dbReference type="PDBsum" id="7S1G"/>
<dbReference type="PDBsum" id="7S1H"/>
<dbReference type="PDBsum" id="7S1I"/>
<dbReference type="PDBsum" id="7S1J"/>
<dbReference type="PDBsum" id="7S1K"/>
<dbReference type="PDBsum" id="7SA4"/>
<dbReference type="PDBsum" id="7SS9"/>
<dbReference type="PDBsum" id="7SSD"/>
<dbReference type="PDBsum" id="7SSL"/>
<dbReference type="PDBsum" id="7SSN"/>
<dbReference type="PDBsum" id="7SSO"/>
<dbReference type="PDBsum" id="7SSW"/>
<dbReference type="PDBsum" id="7ST2"/>
<dbReference type="PDBsum" id="7ST6"/>
<dbReference type="PDBsum" id="7ST7"/>
<dbReference type="PDBsum" id="7TOS"/>
<dbReference type="PDBsum" id="7UG7"/>
<dbReference type="PDBsum" id="7UPH"/>
<dbReference type="PDBsum" id="7Y7C"/>
<dbReference type="PDBsum" id="7Y7D"/>
<dbReference type="PDBsum" id="7Y7E"/>
<dbReference type="PDBsum" id="7Y7F"/>
<dbReference type="PDBsum" id="7Y7G"/>
<dbReference type="PDBsum" id="7Y7H"/>
<dbReference type="PDBsum" id="7ZTA"/>
<dbReference type="PDBsum" id="8A3L"/>
<dbReference type="PDBsum" id="8AKN"/>
<dbReference type="PDBsum" id="8AM9"/>
<dbReference type="PDBsum" id="8AYE"/>
<dbReference type="PDBsum" id="8B0X"/>
<dbReference type="PDBsum" id="8B7Y"/>
<dbReference type="PDBsum" id="8BF7"/>
<dbReference type="PDBsum" id="8BGE"/>
<dbReference type="PDBsum" id="8BGH"/>
<dbReference type="PDBsum" id="8BH4"/>
<dbReference type="PDBsum" id="8BHJ"/>
<dbReference type="PDBsum" id="8BHL"/>
<dbReference type="PDBsum" id="8BHN"/>
<dbReference type="PDBsum" id="8BHP"/>
<dbReference type="PDBsum" id="8BIL"/>
<dbReference type="PDBsum" id="8BIM"/>
<dbReference type="PDBsum" id="8CA7"/>
<dbReference type="PDBsum" id="8CAI"/>
<dbReference type="PDBsum" id="8CAZ"/>
<dbReference type="PDBsum" id="8CF1"/>
<dbReference type="PDBsum" id="8CF8"/>
<dbReference type="PDBsum" id="8CGI"/>
<dbReference type="PDBsum" id="8CGJ"/>
<dbReference type="PDBsum" id="8EIU"/>
<dbReference type="PDBsum" id="8EKC"/>
<dbReference type="PDBsum" id="8EMM"/>
<dbReference type="PDBsum" id="8EYQ"/>
<dbReference type="PDBsum" id="8EYT"/>
<dbReference type="PDBsum" id="8FIZ"/>
<dbReference type="PDBsum" id="8FTO"/>
<dbReference type="PDBsum" id="8FZD"/>
<dbReference type="PDBsum" id="8FZE"/>
<dbReference type="PDBsum" id="8FZF"/>
<dbReference type="PDBsum" id="8FZG"/>
<dbReference type="PDBsum" id="8FZH"/>
<dbReference type="PDBsum" id="8FZI"/>
<dbReference type="PDBsum" id="8FZJ"/>
<dbReference type="PDBsum" id="8G2U"/>
<dbReference type="PDBsum" id="8G31"/>
<dbReference type="PDBsum" id="8G34"/>
<dbReference type="PDBsum" id="8G38"/>
<dbReference type="PDBsum" id="8G6W"/>
<dbReference type="PDBsum" id="8G7P"/>
<dbReference type="PDBsum" id="8G7Q"/>
<dbReference type="PDBsum" id="8G7R"/>
<dbReference type="PDBsum" id="8G7S"/>
<dbReference type="PDBsum" id="8GHU"/>
<dbReference type="PDBsum" id="8HSP"/>
<dbReference type="PDBsum" id="8HTZ"/>
<dbReference type="PDBsum" id="8HU1"/>
<dbReference type="PDBsum" id="8IFB"/>
<dbReference type="PDBsum" id="8IFC"/>
<dbReference type="PDBsum" id="8JSG"/>
<dbReference type="PDBsum" id="8K3O"/>
<dbReference type="PDBsum" id="8K4E"/>
<dbReference type="PDBsum" id="8P16"/>
<dbReference type="PDBsum" id="8P17"/>
<dbReference type="PDBsum" id="8P18"/>
<dbReference type="PDBsum" id="8PEG"/>
<dbReference type="PDBsum" id="8PHJ"/>
<dbReference type="PDBsum" id="8PKL"/>
<dbReference type="PDBsum" id="8PVA"/>
<dbReference type="PDBsum" id="8Q4F"/>
<dbReference type="PDBsum" id="8QK7"/>
<dbReference type="PDBsum" id="8QOA"/>
<dbReference type="PDBsum" id="8R3V"/>
<dbReference type="PDBsum" id="8R6C"/>
<dbReference type="PDBsum" id="8R8M"/>
<dbReference type="PDBsum" id="8RCL"/>
<dbReference type="PDBsum" id="8RCM"/>
<dbReference type="PDBsum" id="8RCS"/>
<dbReference type="PDBsum" id="8RCT"/>
<dbReference type="PDBsum" id="8SYL"/>
<dbReference type="PDBsum" id="8T5D"/>
<dbReference type="PDBsum" id="8T5H"/>
<dbReference type="PDBsum" id="8UPO"/>
<dbReference type="PDBsum" id="8UPR"/>
<dbReference type="PDBsum" id="8UQL"/>
<dbReference type="PDBsum" id="8UQM"/>
<dbReference type="PDBsum" id="8UQP"/>
<dbReference type="PDBsum" id="8UR0"/>
<dbReference type="PDBsum" id="8URH"/>
<dbReference type="PDBsum" id="8URI"/>
<dbReference type="PDBsum" id="8URX"/>
<dbReference type="PDBsum" id="8URY"/>
<dbReference type="PDBsum" id="8VS9"/>
<dbReference type="PDBsum" id="8VSA"/>
<dbReference type="PDBsum" id="8YUO"/>
<dbReference type="PDBsum" id="8YUP"/>
<dbReference type="PDBsum" id="8YUQ"/>
<dbReference type="PDBsum" id="8YUR"/>
<dbReference type="PDBsum" id="8YUS"/>
<dbReference type="PDBsum" id="9AX7"/>
<dbReference type="PDBsum" id="9AX8"/>
<dbReference type="PDBsum" id="9CG5"/>
<dbReference type="PDBsum" id="9CG6"/>
<dbReference type="PDBsum" id="9CG7"/>
<dbReference type="PDBsum" id="9DUK"/>
<dbReference type="PDBsum" id="9DUL"/>
<dbReference type="PDBsum" id="9FBV"/>
<dbReference type="PDBsum" id="9GFT"/>
<dbReference type="PDBsum" id="9GGR"/>
<dbReference type="PDBsum" id="9GUQ"/>
<dbReference type="PDBsum" id="9MOR"/>
<dbReference type="PDBsum" id="9MQ4"/>
<dbReference type="EMDB" id="EMD-0076"/>
<dbReference type="EMDB" id="EMD-0080"/>
<dbReference type="EMDB" id="EMD-0081"/>
<dbReference type="EMDB" id="EMD-0082"/>
<dbReference type="EMDB" id="EMD-0083"/>
<dbReference type="EMDB" id="EMD-0137"/>
<dbReference type="EMDB" id="EMD-0139"/>
<dbReference type="EMDB" id="EMD-0261"/>
<dbReference type="EMDB" id="EMD-10353"/>
<dbReference type="EMDB" id="EMD-10453"/>
<dbReference type="EMDB" id="EMD-10458"/>
<dbReference type="EMDB" id="EMD-10656"/>
<dbReference type="EMDB" id="EMD-10657"/>
<dbReference type="EMDB" id="EMD-10705"/>
<dbReference type="EMDB" id="EMD-11419"/>
<dbReference type="EMDB" id="EMD-11710"/>
<dbReference type="EMDB" id="EMD-11713"/>
<dbReference type="EMDB" id="EMD-11717"/>
<dbReference type="EMDB" id="EMD-11718"/>
<dbReference type="EMDB" id="EMD-12035"/>
<dbReference type="EMDB" id="EMD-12240"/>
<dbReference type="EMDB" id="EMD-12243"/>
<dbReference type="EMDB" id="EMD-12245"/>
<dbReference type="EMDB" id="EMD-12247"/>
<dbReference type="EMDB" id="EMD-12248"/>
<dbReference type="EMDB" id="EMD-12249"/>
<dbReference type="EMDB" id="EMD-12261"/>
<dbReference type="EMDB" id="EMD-12693"/>
<dbReference type="EMDB" id="EMD-12694"/>
<dbReference type="EMDB" id="EMD-12695"/>
<dbReference type="EMDB" id="EMD-12936"/>
<dbReference type="EMDB" id="EMD-12937"/>
<dbReference type="EMDB" id="EMD-13180"/>
<dbReference type="EMDB" id="EMD-13461"/>
<dbReference type="EMDB" id="EMD-13464"/>
<dbReference type="EMDB" id="EMD-13952"/>
<dbReference type="EMDB" id="EMD-13958"/>
<dbReference type="EMDB" id="EMD-14956"/>
<dbReference type="EMDB" id="EMD-15116"/>
<dbReference type="EMDB" id="EMD-15712"/>
<dbReference type="EMDB" id="EMD-15793"/>
<dbReference type="EMDB" id="EMD-15905"/>
<dbReference type="EMDB" id="EMD-16015"/>
<dbReference type="EMDB" id="EMD-16029"/>
<dbReference type="EMDB" id="EMD-16031"/>
<dbReference type="EMDB" id="EMD-16047"/>
<dbReference type="EMDB" id="EMD-16057"/>
<dbReference type="EMDB" id="EMD-16059"/>
<dbReference type="EMDB" id="EMD-16062"/>
<dbReference type="EMDB" id="EMD-16065"/>
<dbReference type="EMDB" id="EMD-16081"/>
<dbReference type="EMDB" id="EMD-16082"/>
<dbReference type="EMDB" id="EMD-16520"/>
<dbReference type="EMDB" id="EMD-16526"/>
<dbReference type="EMDB" id="EMD-16536"/>
<dbReference type="EMDB" id="EMD-16615"/>
<dbReference type="EMDB" id="EMD-16620"/>
<dbReference type="EMDB" id="EMD-16644"/>
<dbReference type="EMDB" id="EMD-16645"/>
<dbReference type="EMDB" id="EMD-17346"/>
<dbReference type="EMDB" id="EMD-17347"/>
<dbReference type="EMDB" id="EMD-17348"/>
<dbReference type="EMDB" id="EMD-17631"/>
<dbReference type="EMDB" id="EMD-17667"/>
<dbReference type="EMDB" id="EMD-17743"/>
<dbReference type="EMDB" id="EMD-17959"/>
<dbReference type="EMDB" id="EMD-18145"/>
<dbReference type="EMDB" id="EMD-18458"/>
<dbReference type="EMDB" id="EMD-18534"/>
<dbReference type="EMDB" id="EMD-18875"/>
<dbReference type="EMDB" id="EMD-18950"/>
<dbReference type="EMDB" id="EMD-19004"/>
<dbReference type="EMDB" id="EMD-19054"/>
<dbReference type="EMDB" id="EMD-19055"/>
<dbReference type="EMDB" id="EMD-19058"/>
<dbReference type="EMDB" id="EMD-19059"/>
<dbReference type="EMDB" id="EMD-20048"/>
<dbReference type="EMDB" id="EMD-20052"/>
<dbReference type="EMDB" id="EMD-21420"/>
<dbReference type="EMDB" id="EMD-21421"/>
<dbReference type="EMDB" id="EMD-21422"/>
<dbReference type="EMDB" id="EMD-21558"/>
<dbReference type="EMDB" id="EMD-21569"/>
<dbReference type="EMDB" id="EMD-21571"/>
<dbReference type="EMDB" id="EMD-21572"/>
<dbReference type="EMDB" id="EMD-21625"/>
<dbReference type="EMDB" id="EMD-21630"/>
<dbReference type="EMDB" id="EMD-21631"/>
<dbReference type="EMDB" id="EMD-21632"/>
<dbReference type="EMDB" id="EMD-21633"/>
<dbReference type="EMDB" id="EMD-21634"/>
<dbReference type="EMDB" id="EMD-21635"/>
<dbReference type="EMDB" id="EMD-21636"/>
<dbReference type="EMDB" id="EMD-21637"/>
<dbReference type="EMDB" id="EMD-21638"/>
<dbReference type="EMDB" id="EMD-21639"/>
<dbReference type="EMDB" id="EMD-21640"/>
<dbReference type="EMDB" id="EMD-21641"/>
<dbReference type="EMDB" id="EMD-21857"/>
<dbReference type="EMDB" id="EMD-21858"/>
<dbReference type="EMDB" id="EMD-22143"/>
<dbReference type="EMDB" id="EMD-22459"/>
<dbReference type="EMDB" id="EMD-22461"/>
<dbReference type="EMDB" id="EMD-22464"/>
<dbReference type="EMDB" id="EMD-22466"/>
<dbReference type="EMDB" id="EMD-22469"/>
<dbReference type="EMDB" id="EMD-22472"/>
<dbReference type="EMDB" id="EMD-22669"/>
<dbReference type="EMDB" id="EMD-22670"/>
<dbReference type="EMDB" id="EMD-22671"/>
<dbReference type="EMDB" id="EMD-22672"/>
<dbReference type="EMDB" id="EMD-22673"/>
<dbReference type="EMDB" id="EMD-22674"/>
<dbReference type="EMDB" id="EMD-23528"/>
<dbReference type="EMDB" id="EMD-24120"/>
<dbReference type="EMDB" id="EMD-24132"/>
<dbReference type="EMDB" id="EMD-24133"/>
<dbReference type="EMDB" id="EMD-24134"/>
<dbReference type="EMDB" id="EMD-24135"/>
<dbReference type="EMDB" id="EMD-24136"/>
<dbReference type="EMDB" id="EMD-24803"/>
<dbReference type="EMDB" id="EMD-25405"/>
<dbReference type="EMDB" id="EMD-25407"/>
<dbReference type="EMDB" id="EMD-25409"/>
<dbReference type="EMDB" id="EMD-25410"/>
<dbReference type="EMDB" id="EMD-25411"/>
<dbReference type="EMDB" id="EMD-25415"/>
<dbReference type="EMDB" id="EMD-25418"/>
<dbReference type="EMDB" id="EMD-25420"/>
<dbReference type="EMDB" id="EMD-25421"/>
<dbReference type="EMDB" id="EMD-30598"/>
<dbReference type="EMDB" id="EMD-30611"/>
<dbReference type="EMDB" id="EMD-33660"/>
<dbReference type="EMDB" id="EMD-33661"/>
<dbReference type="EMDB" id="EMD-33662"/>
<dbReference type="EMDB" id="EMD-33663"/>
<dbReference type="EMDB" id="EMD-33664"/>
<dbReference type="EMDB" id="EMD-33665"/>
<dbReference type="EMDB" id="EMD-3489"/>
<dbReference type="EMDB" id="EMD-3490"/>
<dbReference type="EMDB" id="EMD-3492"/>
<dbReference type="EMDB" id="EMD-3493"/>
<dbReference type="EMDB" id="EMD-3494"/>
<dbReference type="EMDB" id="EMD-3495"/>
<dbReference type="EMDB" id="EMD-35001"/>
<dbReference type="EMDB" id="EMD-35020"/>
<dbReference type="EMDB" id="EMD-35022"/>
<dbReference type="EMDB" id="EMD-3508"/>
<dbReference type="EMDB" id="EMD-35411"/>
<dbReference type="EMDB" id="EMD-35412"/>
<dbReference type="EMDB" id="EMD-3580"/>
<dbReference type="EMDB" id="EMD-36619"/>
<dbReference type="EMDB" id="EMD-3663"/>
<dbReference type="EMDB" id="EMD-36854"/>
<dbReference type="EMDB" id="EMD-36883"/>
<dbReference type="EMDB" id="EMD-3713"/>
<dbReference type="EMDB" id="EMD-3730"/>
<dbReference type="EMDB" id="EMD-3898"/>
<dbReference type="EMDB" id="EMD-3899"/>
<dbReference type="EMDB" id="EMD-3903"/>
<dbReference type="EMDB" id="EMD-39577"/>
<dbReference type="EMDB" id="EMD-39578"/>
<dbReference type="EMDB" id="EMD-39579"/>
<dbReference type="EMDB" id="EMD-39580"/>
<dbReference type="EMDB" id="EMD-39581"/>
<dbReference type="EMDB" id="EMD-4001"/>
<dbReference type="EMDB" id="EMD-4121"/>
<dbReference type="EMDB" id="EMD-4122"/>
<dbReference type="EMDB" id="EMD-4123"/>
<dbReference type="EMDB" id="EMD-4124"/>
<dbReference type="EMDB" id="EMD-4125"/>
<dbReference type="EMDB" id="EMD-4126"/>
<dbReference type="EMDB" id="EMD-4476"/>
<dbReference type="EMDB" id="EMD-4477"/>
<dbReference type="EMDB" id="EMD-4478"/>
<dbReference type="EMDB" id="EMD-50296"/>
<dbReference type="EMDB" id="EMD-51318"/>
<dbReference type="EMDB" id="EMD-51340"/>
<dbReference type="EMDB" id="EMD-51616"/>
<dbReference type="EMDB" id="EMD-6667"/>
<dbReference type="EMDB" id="EMD-7289"/>
<dbReference type="EMDB" id="EMD-7341"/>
<dbReference type="EMDB" id="EMD-8107"/>
<dbReference type="EMDB" id="EMD-8175"/>
<dbReference type="EMDB" id="EMD-8176"/>
<dbReference type="EMDB" id="EMD-8237"/>
<dbReference type="EMDB" id="EMD-8238"/>
<dbReference type="EMDB" id="EMD-8279"/>
<dbReference type="EMDB" id="EMD-8280"/>
<dbReference type="EMDB" id="EMD-8281"/>
<dbReference type="EMDB" id="EMD-8282"/>
<dbReference type="EMDB" id="EMD-8505"/>
<dbReference type="EMDB" id="EMD-8506"/>
<dbReference type="EMDB" id="EMD-8615"/>
<dbReference type="EMDB" id="EMD-8616"/>
<dbReference type="EMDB" id="EMD-8617"/>
<dbReference type="EMDB" id="EMD-8618"/>
<dbReference type="EMDB" id="EMD-8619"/>
<dbReference type="EMDB" id="EMD-8620"/>
<dbReference type="EMDB" id="EMD-8813"/>
<dbReference type="EMDB" id="EMD-8814"/>
<dbReference type="EMDB" id="EMD-8815"/>
<dbReference type="EMDB" id="EMD-8828"/>
<dbReference type="SMR" id="P0A7V3"/>
<dbReference type="BioGRID" id="4261286">
    <property type="interactions" value="134"/>
</dbReference>
<dbReference type="BioGRID" id="852126">
    <property type="interactions" value="9"/>
</dbReference>
<dbReference type="ComplexPortal" id="CPX-3802">
    <property type="entry name" value="30S small ribosomal subunit"/>
</dbReference>
<dbReference type="DIP" id="DIP-35807N"/>
<dbReference type="FunCoup" id="P0A7V3">
    <property type="interactions" value="1422"/>
</dbReference>
<dbReference type="IntAct" id="P0A7V3">
    <property type="interactions" value="206"/>
</dbReference>
<dbReference type="MINT" id="P0A7V3"/>
<dbReference type="STRING" id="511145.b3314"/>
<dbReference type="DrugBank" id="DB09093">
    <property type="generic name" value="Chlortetracycline"/>
</dbReference>
<dbReference type="DrugBank" id="DB12455">
    <property type="generic name" value="Omadacycline"/>
</dbReference>
<dbReference type="DrugBank" id="DB00759">
    <property type="generic name" value="Tetracycline"/>
</dbReference>
<dbReference type="jPOST" id="P0A7V3"/>
<dbReference type="PaxDb" id="511145-b3314"/>
<dbReference type="EnsemblBacteria" id="AAC76339">
    <property type="protein sequence ID" value="AAC76339"/>
    <property type="gene ID" value="b3314"/>
</dbReference>
<dbReference type="GeneID" id="947814"/>
<dbReference type="GeneID" id="97603663"/>
<dbReference type="KEGG" id="ecj:JW3276"/>
<dbReference type="KEGG" id="eco:b3314"/>
<dbReference type="KEGG" id="ecoc:C3026_18010"/>
<dbReference type="PATRIC" id="fig|1411691.4.peg.3417"/>
<dbReference type="EchoBASE" id="EB0895"/>
<dbReference type="eggNOG" id="COG0092">
    <property type="taxonomic scope" value="Bacteria"/>
</dbReference>
<dbReference type="HOGENOM" id="CLU_058591_0_2_6"/>
<dbReference type="InParanoid" id="P0A7V3"/>
<dbReference type="OMA" id="KTNPIGN"/>
<dbReference type="OrthoDB" id="9806396at2"/>
<dbReference type="PhylomeDB" id="P0A7V3"/>
<dbReference type="BioCyc" id="EcoCyc:EG10902-MONOMER"/>
<dbReference type="BioCyc" id="MetaCyc:EG10902-MONOMER"/>
<dbReference type="EvolutionaryTrace" id="P0A7V3"/>
<dbReference type="PRO" id="PR:P0A7V3"/>
<dbReference type="Proteomes" id="UP000000625">
    <property type="component" value="Chromosome"/>
</dbReference>
<dbReference type="GO" id="GO:0005737">
    <property type="term" value="C:cytoplasm"/>
    <property type="evidence" value="ECO:0000314"/>
    <property type="project" value="ComplexPortal"/>
</dbReference>
<dbReference type="GO" id="GO:0005829">
    <property type="term" value="C:cytosol"/>
    <property type="evidence" value="ECO:0000314"/>
    <property type="project" value="EcoCyc"/>
</dbReference>
<dbReference type="GO" id="GO:0022627">
    <property type="term" value="C:cytosolic small ribosomal subunit"/>
    <property type="evidence" value="ECO:0000314"/>
    <property type="project" value="CAFA"/>
</dbReference>
<dbReference type="GO" id="GO:0003729">
    <property type="term" value="F:mRNA binding"/>
    <property type="evidence" value="ECO:0007669"/>
    <property type="project" value="UniProtKB-UniRule"/>
</dbReference>
<dbReference type="GO" id="GO:0019843">
    <property type="term" value="F:rRNA binding"/>
    <property type="evidence" value="ECO:0007669"/>
    <property type="project" value="UniProtKB-UniRule"/>
</dbReference>
<dbReference type="GO" id="GO:0003735">
    <property type="term" value="F:structural constituent of ribosome"/>
    <property type="evidence" value="ECO:0000314"/>
    <property type="project" value="CAFA"/>
</dbReference>
<dbReference type="GO" id="GO:0002181">
    <property type="term" value="P:cytoplasmic translation"/>
    <property type="evidence" value="ECO:0000303"/>
    <property type="project" value="ComplexPortal"/>
</dbReference>
<dbReference type="GO" id="GO:0000028">
    <property type="term" value="P:ribosomal small subunit assembly"/>
    <property type="evidence" value="ECO:0000314"/>
    <property type="project" value="CAFA"/>
</dbReference>
<dbReference type="CDD" id="cd02412">
    <property type="entry name" value="KH-II_30S_S3"/>
    <property type="match status" value="1"/>
</dbReference>
<dbReference type="FunFam" id="3.30.1140.32:FF:000001">
    <property type="entry name" value="30S ribosomal protein S3"/>
    <property type="match status" value="1"/>
</dbReference>
<dbReference type="FunFam" id="3.30.300.20:FF:000001">
    <property type="entry name" value="30S ribosomal protein S3"/>
    <property type="match status" value="1"/>
</dbReference>
<dbReference type="Gene3D" id="3.30.300.20">
    <property type="match status" value="1"/>
</dbReference>
<dbReference type="Gene3D" id="3.30.1140.32">
    <property type="entry name" value="Ribosomal protein S3, C-terminal domain"/>
    <property type="match status" value="1"/>
</dbReference>
<dbReference type="HAMAP" id="MF_01309_B">
    <property type="entry name" value="Ribosomal_uS3_B"/>
    <property type="match status" value="1"/>
</dbReference>
<dbReference type="InterPro" id="IPR004087">
    <property type="entry name" value="KH_dom"/>
</dbReference>
<dbReference type="InterPro" id="IPR015946">
    <property type="entry name" value="KH_dom-like_a/b"/>
</dbReference>
<dbReference type="InterPro" id="IPR004044">
    <property type="entry name" value="KH_dom_type_2"/>
</dbReference>
<dbReference type="InterPro" id="IPR009019">
    <property type="entry name" value="KH_sf_prok-type"/>
</dbReference>
<dbReference type="InterPro" id="IPR036419">
    <property type="entry name" value="Ribosomal_S3_C_sf"/>
</dbReference>
<dbReference type="InterPro" id="IPR005704">
    <property type="entry name" value="Ribosomal_uS3_bac-typ"/>
</dbReference>
<dbReference type="InterPro" id="IPR001351">
    <property type="entry name" value="Ribosomal_uS3_C"/>
</dbReference>
<dbReference type="InterPro" id="IPR018280">
    <property type="entry name" value="Ribosomal_uS3_CS"/>
</dbReference>
<dbReference type="NCBIfam" id="TIGR01009">
    <property type="entry name" value="rpsC_bact"/>
    <property type="match status" value="1"/>
</dbReference>
<dbReference type="PANTHER" id="PTHR11760">
    <property type="entry name" value="30S/40S RIBOSOMAL PROTEIN S3"/>
    <property type="match status" value="1"/>
</dbReference>
<dbReference type="PANTHER" id="PTHR11760:SF19">
    <property type="entry name" value="SMALL RIBOSOMAL SUBUNIT PROTEIN US3C"/>
    <property type="match status" value="1"/>
</dbReference>
<dbReference type="Pfam" id="PF07650">
    <property type="entry name" value="KH_2"/>
    <property type="match status" value="1"/>
</dbReference>
<dbReference type="Pfam" id="PF00189">
    <property type="entry name" value="Ribosomal_S3_C"/>
    <property type="match status" value="1"/>
</dbReference>
<dbReference type="SMART" id="SM00322">
    <property type="entry name" value="KH"/>
    <property type="match status" value="1"/>
</dbReference>
<dbReference type="SUPFAM" id="SSF54814">
    <property type="entry name" value="Prokaryotic type KH domain (KH-domain type II)"/>
    <property type="match status" value="1"/>
</dbReference>
<dbReference type="SUPFAM" id="SSF54821">
    <property type="entry name" value="Ribosomal protein S3 C-terminal domain"/>
    <property type="match status" value="1"/>
</dbReference>
<dbReference type="PROSITE" id="PS50823">
    <property type="entry name" value="KH_TYPE_2"/>
    <property type="match status" value="1"/>
</dbReference>
<dbReference type="PROSITE" id="PS00548">
    <property type="entry name" value="RIBOSOMAL_S3"/>
    <property type="match status" value="1"/>
</dbReference>
<evidence type="ECO:0000250" key="1"/>
<evidence type="ECO:0000255" key="2">
    <source>
        <dbReference type="HAMAP-Rule" id="MF_01309"/>
    </source>
</evidence>
<evidence type="ECO:0000269" key="3">
    <source>
    </source>
</evidence>
<evidence type="ECO:0000269" key="4">
    <source>
    </source>
</evidence>
<evidence type="ECO:0000269" key="5">
    <source>
    </source>
</evidence>
<evidence type="ECO:0000269" key="6">
    <source>
    </source>
</evidence>
<evidence type="ECO:0000269" key="7">
    <source>
    </source>
</evidence>
<evidence type="ECO:0000269" key="8">
    <source>
    </source>
</evidence>
<evidence type="ECO:0000269" key="9">
    <source>
    </source>
</evidence>
<evidence type="ECO:0000269" key="10">
    <source>
    </source>
</evidence>
<evidence type="ECO:0000269" key="11">
    <source>
    </source>
</evidence>
<evidence type="ECO:0000269" key="12">
    <source>
    </source>
</evidence>
<evidence type="ECO:0000269" key="13">
    <source>
    </source>
</evidence>
<evidence type="ECO:0000269" key="14">
    <source>
    </source>
</evidence>
<evidence type="ECO:0000303" key="15">
    <source>
    </source>
</evidence>
<evidence type="ECO:0000305" key="16"/>
<evidence type="ECO:0007744" key="17">
    <source>
        <dbReference type="PDB" id="5MDV"/>
    </source>
</evidence>
<evidence type="ECO:0007744" key="18">
    <source>
        <dbReference type="PDB" id="5MDW"/>
    </source>
</evidence>
<evidence type="ECO:0007744" key="19">
    <source>
        <dbReference type="PDB" id="5MDY"/>
    </source>
</evidence>
<evidence type="ECO:0007744" key="20">
    <source>
        <dbReference type="PDB" id="5MDZ"/>
    </source>
</evidence>
<evidence type="ECO:0007744" key="21">
    <source>
        <dbReference type="PDB" id="7QG8"/>
    </source>
</evidence>
<evidence type="ECO:0007744" key="22">
    <source>
        <dbReference type="PDB" id="7QGR"/>
    </source>
</evidence>
<evidence type="ECO:0007829" key="23">
    <source>
        <dbReference type="PDB" id="7OE0"/>
    </source>
</evidence>
<evidence type="ECO:0007829" key="24">
    <source>
        <dbReference type="PDB" id="8CF1"/>
    </source>
</evidence>
<evidence type="ECO:0007829" key="25">
    <source>
        <dbReference type="PDB" id="8CGJ"/>
    </source>
</evidence>
<evidence type="ECO:0007829" key="26">
    <source>
        <dbReference type="PDB" id="8GHU"/>
    </source>
</evidence>
<protein>
    <recommendedName>
        <fullName evidence="15">Small ribosomal subunit protein uS3</fullName>
    </recommendedName>
    <alternativeName>
        <fullName>30S ribosomal protein S3</fullName>
    </alternativeName>
</protein>
<comment type="function">
    <text evidence="1">Binds the lower part of the 30S subunit head. Binds mRNA in the 70S ribosome, positioning it for translation (By similarity).</text>
</comment>
<comment type="function">
    <text evidence="6">Plays a role in mRNA unwinding by the ribosome, possibly by forming part of a processivity clamp.</text>
</comment>
<comment type="subunit">
    <text evidence="2 3 4 5 7 8 9 10 11 12 13 14">Part of the 30S ribosomal subunit (PubMed:10094780, PubMed:12244297, PubMed:12809609, PubMed:16272117, PubMed:27906160, PubMed:27906161, PubMed:27934701, PubMed:28077875, PubMed:387449, PubMed:7556101). Forms a tight complex with proteins uS10 and uS14 (By similarity). With proteins uS4 and uS5 encircles the mRNA as it enters the ribosome, which may play a role in mRNA helicase processivity. Some nascent polypeptide chains are able to cross-link to this protein in situ. In collided ribosomes contacts ribosome rescue factor SmrB (PubMed:35264790).</text>
</comment>
<comment type="mass spectrometry"/>
<comment type="similarity">
    <text evidence="16">Belongs to the universal ribosomal protein uS3 family.</text>
</comment>
<accession>P0A7V3</accession>
<accession>P02352</accession>
<accession>Q2M6X9</accession>
<reference key="1">
    <citation type="journal article" date="1985" name="Nucleic Acids Res.">
        <title>Structure of the Escherichia coli S10 ribosomal protein operon.</title>
        <authorList>
            <person name="Zurawski G."/>
            <person name="Zurawski S.M."/>
        </authorList>
    </citation>
    <scope>NUCLEOTIDE SEQUENCE [GENOMIC DNA]</scope>
</reference>
<reference key="2">
    <citation type="journal article" date="1997" name="Science">
        <title>The complete genome sequence of Escherichia coli K-12.</title>
        <authorList>
            <person name="Blattner F.R."/>
            <person name="Plunkett G. III"/>
            <person name="Bloch C.A."/>
            <person name="Perna N.T."/>
            <person name="Burland V."/>
            <person name="Riley M."/>
            <person name="Collado-Vides J."/>
            <person name="Glasner J.D."/>
            <person name="Rode C.K."/>
            <person name="Mayhew G.F."/>
            <person name="Gregor J."/>
            <person name="Davis N.W."/>
            <person name="Kirkpatrick H.A."/>
            <person name="Goeden M.A."/>
            <person name="Rose D.J."/>
            <person name="Mau B."/>
            <person name="Shao Y."/>
        </authorList>
    </citation>
    <scope>NUCLEOTIDE SEQUENCE [LARGE SCALE GENOMIC DNA]</scope>
    <source>
        <strain>K12 / MG1655 / ATCC 47076</strain>
    </source>
</reference>
<reference key="3">
    <citation type="journal article" date="2006" name="Mol. Syst. Biol.">
        <title>Highly accurate genome sequences of Escherichia coli K-12 strains MG1655 and W3110.</title>
        <authorList>
            <person name="Hayashi K."/>
            <person name="Morooka N."/>
            <person name="Yamamoto Y."/>
            <person name="Fujita K."/>
            <person name="Isono K."/>
            <person name="Choi S."/>
            <person name="Ohtsubo E."/>
            <person name="Baba T."/>
            <person name="Wanner B.L."/>
            <person name="Mori H."/>
            <person name="Horiuchi T."/>
        </authorList>
    </citation>
    <scope>NUCLEOTIDE SEQUENCE [LARGE SCALE GENOMIC DNA]</scope>
    <source>
        <strain>K12 / W3110 / ATCC 27325 / DSM 5911</strain>
    </source>
</reference>
<reference key="4">
    <citation type="journal article" date="1979" name="FEBS Lett.">
        <title>The primary structure of protein S3 from the small ribosomal subunit of Escherichia coli.</title>
        <authorList>
            <person name="Brauer D."/>
            <person name="Roming R."/>
        </authorList>
    </citation>
    <scope>PROTEIN SEQUENCE OF 2-233</scope>
    <scope>SUBUNIT</scope>
    <source>
        <strain>K</strain>
    </source>
</reference>
<reference key="5">
    <citation type="journal article" date="1995" name="EMBO J.">
        <title>Protein-rRNA binding features and their structural and functional implications in ribosomes as determined by cross-linking studies.</title>
        <authorList>
            <person name="Urlaub H."/>
            <person name="Kruft V."/>
            <person name="Bischof O."/>
            <person name="Mueller E.-C."/>
            <person name="Wittmann-Liebold B."/>
        </authorList>
    </citation>
    <scope>PROTEIN SEQUENCE OF 39-49 AND 87-108</scope>
    <scope>SUBUNIT</scope>
    <scope>CROSS-LINKING TO RRNA</scope>
    <source>
        <strain>MRE-600</strain>
    </source>
</reference>
<reference key="6">
    <citation type="journal article" date="1998" name="Eur. J. Biochem.">
        <title>Flexibility of the nascent polypeptide chain within the ribosome -- contacts from the peptide N-terminus to a specific region of the 30S subunit.</title>
        <authorList>
            <person name="Choi K.M."/>
            <person name="Atkins J.F."/>
            <person name="Gesteland R.F."/>
            <person name="Brimacombe R."/>
        </authorList>
    </citation>
    <scope>CROSS-LINKING TO NASCENT POLYPEPTIDE CHAINS</scope>
</reference>
<reference key="7">
    <citation type="journal article" date="2005" name="Cell">
        <title>mRNA helicase activity of the ribosome.</title>
        <authorList>
            <person name="Takyar S."/>
            <person name="Hickerson R.P."/>
            <person name="Noller H.F."/>
        </authorList>
    </citation>
    <scope>ROLE IN MRNA HELICASE ACTIVITY</scope>
    <scope>MUTAGENESIS</scope>
    <source>
        <strain>MRE-600</strain>
    </source>
</reference>
<reference key="8">
    <citation type="journal article" date="1999" name="Anal. Biochem.">
        <title>Observation of Escherichia coli ribosomal proteins and their posttranslational modifications by mass spectrometry.</title>
        <authorList>
            <person name="Arnold R.J."/>
            <person name="Reilly J.P."/>
        </authorList>
    </citation>
    <scope>MASS SPECTROMETRY</scope>
    <scope>SUBUNIT</scope>
    <source>
        <strain>K12 / ATCC 25404 / DSM 5698 / NCIMB 11290</strain>
    </source>
</reference>
<reference key="9">
    <citation type="journal article" date="2014" name="Curr. Opin. Struct. Biol.">
        <title>A new system for naming ribosomal proteins.</title>
        <authorList>
            <person name="Ban N."/>
            <person name="Beckmann R."/>
            <person name="Cate J.H.D."/>
            <person name="Dinman J.D."/>
            <person name="Dragon F."/>
            <person name="Ellis S.R."/>
            <person name="Lafontaine D.L.J."/>
            <person name="Lindahl L."/>
            <person name="Liljas A."/>
            <person name="Lipton J.M."/>
            <person name="McAlear M.A."/>
            <person name="Moore P.B."/>
            <person name="Noller H.F."/>
            <person name="Ortega J."/>
            <person name="Panse V.G."/>
            <person name="Ramakrishnan V."/>
            <person name="Spahn C.M.T."/>
            <person name="Steitz T.A."/>
            <person name="Tchorzewski M."/>
            <person name="Tollervey D."/>
            <person name="Warren A.J."/>
            <person name="Williamson J.R."/>
            <person name="Wilson D."/>
            <person name="Yonath A."/>
            <person name="Yusupov M."/>
        </authorList>
    </citation>
    <scope>NOMENCLATURE</scope>
</reference>
<reference key="10">
    <citation type="journal article" date="2002" name="Nat. Struct. Biol.">
        <title>All-atom homology model of the Escherichia coli 30S ribosomal subunit.</title>
        <authorList>
            <person name="Tung C.-S."/>
            <person name="Joseph S."/>
            <person name="Sanbonmatsu K.Y."/>
        </authorList>
    </citation>
    <scope>3D-STRUCTURE MODELING</scope>
    <scope>SUBUNIT</scope>
</reference>
<reference key="11">
    <citation type="journal article" date="2003" name="Cell">
        <title>Study of the structural dynamics of the E. coli 70S ribosome using real-space refinement.</title>
        <authorList>
            <person name="Gao H."/>
            <person name="Sengupta J."/>
            <person name="Valle M."/>
            <person name="Korostelev A."/>
            <person name="Eswar N."/>
            <person name="Stagg S.M."/>
            <person name="Van Roey P."/>
            <person name="Agrawal R.K."/>
            <person name="Harvey S.C."/>
            <person name="Sali A."/>
            <person name="Chapman M.S."/>
            <person name="Frank J."/>
        </authorList>
    </citation>
    <scope>STRUCTURE BY ELECTRON MICROSCOPY (11.50 ANGSTROMS)</scope>
    <scope>SUBUNIT</scope>
    <source>
        <strain>MRE-600</strain>
    </source>
</reference>
<reference key="12">
    <citation type="journal article" date="2005" name="Science">
        <title>Structures of the bacterial ribosome at 3.5 A resolution.</title>
        <authorList>
            <person name="Schuwirth B.S."/>
            <person name="Borovinskaya M.A."/>
            <person name="Hau C.W."/>
            <person name="Zhang W."/>
            <person name="Vila-Sanjurjo A."/>
            <person name="Holton J.M."/>
            <person name="Cate J.H.D."/>
        </authorList>
    </citation>
    <scope>X-RAY CRYSTALLOGRAPHY (3.46 ANGSTROMS) OF 2 DIFFERENT RIBOSOME STRUCTURES</scope>
    <scope>SUBUNIT</scope>
    <source>
        <strain>MRE-600</strain>
    </source>
</reference>
<reference key="13">
    <citation type="journal article" date="2017" name="Nature">
        <title>Mechanistic insights into the alternative translation termination by ArfA and RF2.</title>
        <authorList>
            <person name="Ma C."/>
            <person name="Kurita D."/>
            <person name="Li N."/>
            <person name="Chen Y."/>
            <person name="Himeno H."/>
            <person name="Gao N."/>
        </authorList>
    </citation>
    <scope>STRUCTURE BY ELECTRON MICROSCOPY (3.0 ANGSTROMS) OF 70S RIBOSOME IN COMPLEX WITH ARFA AND RF2</scope>
    <scope>SUBUNIT</scope>
</reference>
<reference key="14">
    <citation type="journal article" date="2017" name="Nature">
        <title>Structural basis for ArfA-RF2-mediated translation termination on mRNAs lacking stop codons.</title>
        <authorList>
            <person name="Huter P."/>
            <person name="Mueller C."/>
            <person name="Beckert B."/>
            <person name="Arenz S."/>
            <person name="Berninghausen O."/>
            <person name="Beckmann R."/>
            <person name="Wilson D.N."/>
        </authorList>
    </citation>
    <scope>STRUCTURE BY ELECTRON MICROSCOPY (3.1 ANGSTROMS) OF 70S RIBOSOME IN COMPLEX WITH ARFA AND RF2</scope>
    <scope>SUBUNIT</scope>
</reference>
<reference evidence="17 18 19 20" key="15">
    <citation type="journal article" date="2016" name="Science">
        <title>Translational termination without a stop codon.</title>
        <authorList>
            <person name="James N.R."/>
            <person name="Brown A."/>
            <person name="Gordiyenko Y."/>
            <person name="Ramakrishnan V."/>
        </authorList>
    </citation>
    <scope>STRUCTURE BY ELECTRON MICROSCOPY (2.97 ANGSTROMS) OF 70S RIBOSOME IN COMPLEX WITH ARFA AND RF2</scope>
    <scope>SUBUNIT</scope>
</reference>
<reference key="16">
    <citation type="journal article" date="2017" name="Nature">
        <title>Structural basis of co-translational quality control by ArfA and RF2 bound to ribosome.</title>
        <authorList>
            <person name="Zeng F."/>
            <person name="Chen Y."/>
            <person name="Remis J."/>
            <person name="Shekhar M."/>
            <person name="Phillips J.C."/>
            <person name="Tajkhorshid E."/>
            <person name="Jin H."/>
        </authorList>
    </citation>
    <scope>STRUCTURE BY ELECTRON MICROSCOPY (3.52 ANGSTROMS) OF 70S RIBOSOME IN COMPLEX WITH ARFA AND RF2</scope>
    <scope>SUBUNIT</scope>
</reference>
<reference evidence="21 22" key="17">
    <citation type="journal article" date="2022" name="Nature">
        <title>Ribosome collisions induce mRNA cleavage and ribosome rescue in bacteria.</title>
        <authorList>
            <person name="Saito K."/>
            <person name="Kratzat H."/>
            <person name="Campbell A."/>
            <person name="Buschauer R."/>
            <person name="Burroughs A.M."/>
            <person name="Berninghausen O."/>
            <person name="Aravind L."/>
            <person name="Green R."/>
            <person name="Beckmann R."/>
            <person name="Buskirk A.R."/>
        </authorList>
    </citation>
    <scope>STRUCTURE BY ELECTRON MICROSCOPY (3.37 ANGSTROMS)</scope>
    <scope>INTERACTION WITH SMRB</scope>
    <source>
        <strain>K12 / MG1655 / ATCC 47076</strain>
    </source>
</reference>
<organism>
    <name type="scientific">Escherichia coli (strain K12)</name>
    <dbReference type="NCBI Taxonomy" id="83333"/>
    <lineage>
        <taxon>Bacteria</taxon>
        <taxon>Pseudomonadati</taxon>
        <taxon>Pseudomonadota</taxon>
        <taxon>Gammaproteobacteria</taxon>
        <taxon>Enterobacterales</taxon>
        <taxon>Enterobacteriaceae</taxon>
        <taxon>Escherichia</taxon>
    </lineage>
</organism>
<sequence>MGQKVHPNGIRLGIVKPWNSTWFANTKEFADNLDSDFKVRQYLTKELAKASVSRIVIERPAKSIRVTIHTARPGIVIGKKGEDVEKLRKVVADIAGVPAQINIAEVRKPELDAKLVADSITSQLERRVMFRRAMKRAVQNAMRLGAKGIKVEVSGRLGGAEIARTEWYREGRVPLHTLRADIDYNTSEAHTTYGVIGVKVWIFKGEILGGMAAVEQPEKPAAQPKKQQRKGRK</sequence>
<name>RS3_ECOLI</name>
<gene>
    <name type="primary">rpsC</name>
    <name type="ordered locus">b3314</name>
    <name type="ordered locus">JW3276</name>
</gene>